<evidence type="ECO:0000250" key="1">
    <source>
        <dbReference type="UniProtKB" id="P17220"/>
    </source>
</evidence>
<evidence type="ECO:0000250" key="2">
    <source>
        <dbReference type="UniProtKB" id="P49722"/>
    </source>
</evidence>
<evidence type="ECO:0000255" key="3">
    <source>
        <dbReference type="PROSITE-ProRule" id="PRU00808"/>
    </source>
</evidence>
<evidence type="ECO:0000269" key="4">
    <source>
    </source>
</evidence>
<evidence type="ECO:0000269" key="5">
    <source>
    </source>
</evidence>
<evidence type="ECO:0000269" key="6">
    <source>
    </source>
</evidence>
<evidence type="ECO:0000269" key="7">
    <source>
    </source>
</evidence>
<evidence type="ECO:0000269" key="8">
    <source>
    </source>
</evidence>
<evidence type="ECO:0000269" key="9">
    <source>
    </source>
</evidence>
<evidence type="ECO:0000269" key="10">
    <source>
    </source>
</evidence>
<evidence type="ECO:0000269" key="11">
    <source>
    </source>
</evidence>
<evidence type="ECO:0000269" key="12">
    <source>
    </source>
</evidence>
<evidence type="ECO:0000269" key="13">
    <source>
    </source>
</evidence>
<evidence type="ECO:0000269" key="14">
    <source>
    </source>
</evidence>
<evidence type="ECO:0000269" key="15">
    <source>
    </source>
</evidence>
<evidence type="ECO:0000269" key="16">
    <source>
    </source>
</evidence>
<evidence type="ECO:0000303" key="17">
    <source>
    </source>
</evidence>
<evidence type="ECO:0000312" key="18">
    <source>
        <dbReference type="HGNC" id="HGNC:9531"/>
    </source>
</evidence>
<evidence type="ECO:0007744" key="19">
    <source>
    </source>
</evidence>
<evidence type="ECO:0007744" key="20">
    <source>
    </source>
</evidence>
<evidence type="ECO:0007744" key="21">
    <source>
    </source>
</evidence>
<evidence type="ECO:0007744" key="22">
    <source>
    </source>
</evidence>
<evidence type="ECO:0007829" key="23">
    <source>
        <dbReference type="PDB" id="5LE5"/>
    </source>
</evidence>
<evidence type="ECO:0007829" key="24">
    <source>
        <dbReference type="PDB" id="5LEY"/>
    </source>
</evidence>
<evidence type="ECO:0007829" key="25">
    <source>
        <dbReference type="PDB" id="5LF3"/>
    </source>
</evidence>
<evidence type="ECO:0007829" key="26">
    <source>
        <dbReference type="PDB" id="6E5B"/>
    </source>
</evidence>
<evidence type="ECO:0007829" key="27">
    <source>
        <dbReference type="PDB" id="8BZL"/>
    </source>
</evidence>
<evidence type="ECO:0007829" key="28">
    <source>
        <dbReference type="PDB" id="8QYJ"/>
    </source>
</evidence>
<evidence type="ECO:0007829" key="29">
    <source>
        <dbReference type="PDB" id="8QYN"/>
    </source>
</evidence>
<reference key="1">
    <citation type="journal article" date="1991" name="Biochim. Biophys. Acta">
        <title>Molecular cloning and sequence analysis of cDNAs for five major subunits of human proteasomes (multi-catalytic proteinase complexes).</title>
        <authorList>
            <person name="Tamura T."/>
            <person name="Lee D.H."/>
            <person name="Osaka F."/>
            <person name="Fujiwara T."/>
            <person name="Shin S."/>
            <person name="Chung C.H."/>
            <person name="Tanaka K."/>
            <person name="Ichihara A."/>
        </authorList>
    </citation>
    <scope>NUCLEOTIDE SEQUENCE [MRNA]</scope>
</reference>
<reference key="2">
    <citation type="journal article" date="2004" name="Nat. Genet.">
        <title>Complete sequencing and characterization of 21,243 full-length human cDNAs.</title>
        <authorList>
            <person name="Ota T."/>
            <person name="Suzuki Y."/>
            <person name="Nishikawa T."/>
            <person name="Otsuki T."/>
            <person name="Sugiyama T."/>
            <person name="Irie R."/>
            <person name="Wakamatsu A."/>
            <person name="Hayashi K."/>
            <person name="Sato H."/>
            <person name="Nagai K."/>
            <person name="Kimura K."/>
            <person name="Makita H."/>
            <person name="Sekine M."/>
            <person name="Obayashi M."/>
            <person name="Nishi T."/>
            <person name="Shibahara T."/>
            <person name="Tanaka T."/>
            <person name="Ishii S."/>
            <person name="Yamamoto J."/>
            <person name="Saito K."/>
            <person name="Kawai Y."/>
            <person name="Isono Y."/>
            <person name="Nakamura Y."/>
            <person name="Nagahari K."/>
            <person name="Murakami K."/>
            <person name="Yasuda T."/>
            <person name="Iwayanagi T."/>
            <person name="Wagatsuma M."/>
            <person name="Shiratori A."/>
            <person name="Sudo H."/>
            <person name="Hosoiri T."/>
            <person name="Kaku Y."/>
            <person name="Kodaira H."/>
            <person name="Kondo H."/>
            <person name="Sugawara M."/>
            <person name="Takahashi M."/>
            <person name="Kanda K."/>
            <person name="Yokoi T."/>
            <person name="Furuya T."/>
            <person name="Kikkawa E."/>
            <person name="Omura Y."/>
            <person name="Abe K."/>
            <person name="Kamihara K."/>
            <person name="Katsuta N."/>
            <person name="Sato K."/>
            <person name="Tanikawa M."/>
            <person name="Yamazaki M."/>
            <person name="Ninomiya K."/>
            <person name="Ishibashi T."/>
            <person name="Yamashita H."/>
            <person name="Murakawa K."/>
            <person name="Fujimori K."/>
            <person name="Tanai H."/>
            <person name="Kimata M."/>
            <person name="Watanabe M."/>
            <person name="Hiraoka S."/>
            <person name="Chiba Y."/>
            <person name="Ishida S."/>
            <person name="Ono Y."/>
            <person name="Takiguchi S."/>
            <person name="Watanabe S."/>
            <person name="Yosida M."/>
            <person name="Hotuta T."/>
            <person name="Kusano J."/>
            <person name="Kanehori K."/>
            <person name="Takahashi-Fujii A."/>
            <person name="Hara H."/>
            <person name="Tanase T.-O."/>
            <person name="Nomura Y."/>
            <person name="Togiya S."/>
            <person name="Komai F."/>
            <person name="Hara R."/>
            <person name="Takeuchi K."/>
            <person name="Arita M."/>
            <person name="Imose N."/>
            <person name="Musashino K."/>
            <person name="Yuuki H."/>
            <person name="Oshima A."/>
            <person name="Sasaki N."/>
            <person name="Aotsuka S."/>
            <person name="Yoshikawa Y."/>
            <person name="Matsunawa H."/>
            <person name="Ichihara T."/>
            <person name="Shiohata N."/>
            <person name="Sano S."/>
            <person name="Moriya S."/>
            <person name="Momiyama H."/>
            <person name="Satoh N."/>
            <person name="Takami S."/>
            <person name="Terashima Y."/>
            <person name="Suzuki O."/>
            <person name="Nakagawa S."/>
            <person name="Senoh A."/>
            <person name="Mizoguchi H."/>
            <person name="Goto Y."/>
            <person name="Shimizu F."/>
            <person name="Wakebe H."/>
            <person name="Hishigaki H."/>
            <person name="Watanabe T."/>
            <person name="Sugiyama A."/>
            <person name="Takemoto M."/>
            <person name="Kawakami B."/>
            <person name="Yamazaki M."/>
            <person name="Watanabe K."/>
            <person name="Kumagai A."/>
            <person name="Itakura S."/>
            <person name="Fukuzumi Y."/>
            <person name="Fujimori Y."/>
            <person name="Komiyama M."/>
            <person name="Tashiro H."/>
            <person name="Tanigami A."/>
            <person name="Fujiwara T."/>
            <person name="Ono T."/>
            <person name="Yamada K."/>
            <person name="Fujii Y."/>
            <person name="Ozaki K."/>
            <person name="Hirao M."/>
            <person name="Ohmori Y."/>
            <person name="Kawabata A."/>
            <person name="Hikiji T."/>
            <person name="Kobatake N."/>
            <person name="Inagaki H."/>
            <person name="Ikema Y."/>
            <person name="Okamoto S."/>
            <person name="Okitani R."/>
            <person name="Kawakami T."/>
            <person name="Noguchi S."/>
            <person name="Itoh T."/>
            <person name="Shigeta K."/>
            <person name="Senba T."/>
            <person name="Matsumura K."/>
            <person name="Nakajima Y."/>
            <person name="Mizuno T."/>
            <person name="Morinaga M."/>
            <person name="Sasaki M."/>
            <person name="Togashi T."/>
            <person name="Oyama M."/>
            <person name="Hata H."/>
            <person name="Watanabe M."/>
            <person name="Komatsu T."/>
            <person name="Mizushima-Sugano J."/>
            <person name="Satoh T."/>
            <person name="Shirai Y."/>
            <person name="Takahashi Y."/>
            <person name="Nakagawa K."/>
            <person name="Okumura K."/>
            <person name="Nagase T."/>
            <person name="Nomura N."/>
            <person name="Kikuchi H."/>
            <person name="Masuho Y."/>
            <person name="Yamashita R."/>
            <person name="Nakai K."/>
            <person name="Yada T."/>
            <person name="Nakamura Y."/>
            <person name="Ohara O."/>
            <person name="Isogai T."/>
            <person name="Sugano S."/>
        </authorList>
    </citation>
    <scope>NUCLEOTIDE SEQUENCE [LARGE SCALE MRNA]</scope>
</reference>
<reference key="3">
    <citation type="submission" date="2004-05" db="EMBL/GenBank/DDBJ databases">
        <title>Cloning of human full open reading frames in Gateway(TM) system entry vector (pDONR201).</title>
        <authorList>
            <person name="Ebert L."/>
            <person name="Schick M."/>
            <person name="Neubert P."/>
            <person name="Schatten R."/>
            <person name="Henze S."/>
            <person name="Korn B."/>
        </authorList>
    </citation>
    <scope>NUCLEOTIDE SEQUENCE [LARGE SCALE MRNA]</scope>
</reference>
<reference key="4">
    <citation type="journal article" date="2003" name="Science">
        <title>Human chromosome 7: DNA sequence and biology.</title>
        <authorList>
            <person name="Scherer S.W."/>
            <person name="Cheung J."/>
            <person name="MacDonald J.R."/>
            <person name="Osborne L.R."/>
            <person name="Nakabayashi K."/>
            <person name="Herbrick J.-A."/>
            <person name="Carson A.R."/>
            <person name="Parker-Katiraee L."/>
            <person name="Skaug J."/>
            <person name="Khaja R."/>
            <person name="Zhang J."/>
            <person name="Hudek A.K."/>
            <person name="Li M."/>
            <person name="Haddad M."/>
            <person name="Duggan G.E."/>
            <person name="Fernandez B.A."/>
            <person name="Kanematsu E."/>
            <person name="Gentles S."/>
            <person name="Christopoulos C.C."/>
            <person name="Choufani S."/>
            <person name="Kwasnicka D."/>
            <person name="Zheng X.H."/>
            <person name="Lai Z."/>
            <person name="Nusskern D.R."/>
            <person name="Zhang Q."/>
            <person name="Gu Z."/>
            <person name="Lu F."/>
            <person name="Zeesman S."/>
            <person name="Nowaczyk M.J."/>
            <person name="Teshima I."/>
            <person name="Chitayat D."/>
            <person name="Shuman C."/>
            <person name="Weksberg R."/>
            <person name="Zackai E.H."/>
            <person name="Grebe T.A."/>
            <person name="Cox S.R."/>
            <person name="Kirkpatrick S.J."/>
            <person name="Rahman N."/>
            <person name="Friedman J.M."/>
            <person name="Heng H.H.Q."/>
            <person name="Pelicci P.G."/>
            <person name="Lo-Coco F."/>
            <person name="Belloni E."/>
            <person name="Shaffer L.G."/>
            <person name="Pober B."/>
            <person name="Morton C.C."/>
            <person name="Gusella J.F."/>
            <person name="Bruns G.A.P."/>
            <person name="Korf B.R."/>
            <person name="Quade B.J."/>
            <person name="Ligon A.H."/>
            <person name="Ferguson H."/>
            <person name="Higgins A.W."/>
            <person name="Leach N.T."/>
            <person name="Herrick S.R."/>
            <person name="Lemyre E."/>
            <person name="Farra C.G."/>
            <person name="Kim H.-G."/>
            <person name="Summers A.M."/>
            <person name="Gripp K.W."/>
            <person name="Roberts W."/>
            <person name="Szatmari P."/>
            <person name="Winsor E.J.T."/>
            <person name="Grzeschik K.-H."/>
            <person name="Teebi A."/>
            <person name="Minassian B.A."/>
            <person name="Kere J."/>
            <person name="Armengol L."/>
            <person name="Pujana M.A."/>
            <person name="Estivill X."/>
            <person name="Wilson M.D."/>
            <person name="Koop B.F."/>
            <person name="Tosi S."/>
            <person name="Moore G.E."/>
            <person name="Boright A.P."/>
            <person name="Zlotorynski E."/>
            <person name="Kerem B."/>
            <person name="Kroisel P.M."/>
            <person name="Petek E."/>
            <person name="Oscier D.G."/>
            <person name="Mould S.J."/>
            <person name="Doehner H."/>
            <person name="Doehner K."/>
            <person name="Rommens J.M."/>
            <person name="Vincent J.B."/>
            <person name="Venter J.C."/>
            <person name="Li P.W."/>
            <person name="Mural R.J."/>
            <person name="Adams M.D."/>
            <person name="Tsui L.-C."/>
        </authorList>
    </citation>
    <scope>NUCLEOTIDE SEQUENCE [LARGE SCALE GENOMIC DNA]</scope>
</reference>
<reference key="5">
    <citation type="submission" date="2005-07" db="EMBL/GenBank/DDBJ databases">
        <authorList>
            <person name="Mural R.J."/>
            <person name="Istrail S."/>
            <person name="Sutton G.G."/>
            <person name="Florea L."/>
            <person name="Halpern A.L."/>
            <person name="Mobarry C.M."/>
            <person name="Lippert R."/>
            <person name="Walenz B."/>
            <person name="Shatkay H."/>
            <person name="Dew I."/>
            <person name="Miller J.R."/>
            <person name="Flanigan M.J."/>
            <person name="Edwards N.J."/>
            <person name="Bolanos R."/>
            <person name="Fasulo D."/>
            <person name="Halldorsson B.V."/>
            <person name="Hannenhalli S."/>
            <person name="Turner R."/>
            <person name="Yooseph S."/>
            <person name="Lu F."/>
            <person name="Nusskern D.R."/>
            <person name="Shue B.C."/>
            <person name="Zheng X.H."/>
            <person name="Zhong F."/>
            <person name="Delcher A.L."/>
            <person name="Huson D.H."/>
            <person name="Kravitz S.A."/>
            <person name="Mouchard L."/>
            <person name="Reinert K."/>
            <person name="Remington K.A."/>
            <person name="Clark A.G."/>
            <person name="Waterman M.S."/>
            <person name="Eichler E.E."/>
            <person name="Adams M.D."/>
            <person name="Hunkapiller M.W."/>
            <person name="Myers E.W."/>
            <person name="Venter J.C."/>
        </authorList>
    </citation>
    <scope>NUCLEOTIDE SEQUENCE [LARGE SCALE GENOMIC DNA]</scope>
</reference>
<reference key="6">
    <citation type="journal article" date="2004" name="Genome Res.">
        <title>The status, quality, and expansion of the NIH full-length cDNA project: the Mammalian Gene Collection (MGC).</title>
        <authorList>
            <consortium name="The MGC Project Team"/>
        </authorList>
    </citation>
    <scope>NUCLEOTIDE SEQUENCE [LARGE SCALE MRNA]</scope>
    <source>
        <tissue>Lung</tissue>
        <tissue>Uterus</tissue>
    </source>
</reference>
<reference key="7">
    <citation type="submission" date="2007-03" db="UniProtKB">
        <authorList>
            <person name="Lubec G."/>
            <person name="Afjehi-Sadat L."/>
        </authorList>
    </citation>
    <scope>PROTEIN SEQUENCE OF 5-39; 71-84; 93-113 AND 178-196</scope>
    <scope>IDENTIFICATION BY MASS SPECTROMETRY</scope>
    <source>
        <tissue>Brain</tissue>
        <tissue>Cajal-Retzius cell</tissue>
    </source>
</reference>
<reference key="8">
    <citation type="journal article" date="1994" name="Biochem. Biophys. Res. Commun.">
        <title>Human proteasome subunits from 2-dimensional gels identified by partial sequencing.</title>
        <authorList>
            <person name="Kristensen P."/>
            <person name="Johnsen A.H."/>
            <person name="Uerkvitz W."/>
            <person name="Tanaka K."/>
            <person name="Hendil K.B."/>
        </authorList>
    </citation>
    <scope>PROTEIN SEQUENCE OF 5-14</scope>
</reference>
<reference key="9">
    <citation type="journal article" date="1996" name="Nature">
        <title>A role for the proteasome regulator PA28alpha in antigen presentation.</title>
        <authorList>
            <person name="Groettrup M."/>
            <person name="Soza A."/>
            <person name="Eggers M."/>
            <person name="Kuehn L."/>
            <person name="Dick T.P."/>
            <person name="Schild H."/>
            <person name="Rammensee H.G."/>
            <person name="Koszinowski U.H."/>
            <person name="Kloetzel P.M."/>
        </authorList>
    </citation>
    <scope>FUNCTION IN ANTIGEN PRESENTATION</scope>
</reference>
<reference key="10">
    <citation type="journal article" date="2000" name="J. Atheroscler. Thromb.">
        <title>Gene expression induced by BO-653, probucol and BHQ in human endothelial cells.</title>
        <authorList>
            <person name="Takabe W."/>
            <person name="Mataki C."/>
            <person name="Wada Y."/>
            <person name="Ishii M."/>
            <person name="Izumi A."/>
            <person name="Aburatani H."/>
            <person name="Hamakubo T."/>
            <person name="Niki E."/>
            <person name="Kodama T."/>
            <person name="Noguchi N."/>
        </authorList>
    </citation>
    <scope>INDUCTION BY BO-653 AND PROBUCOL</scope>
</reference>
<reference key="11">
    <citation type="journal article" date="2002" name="Mol. Biol. Cell">
        <title>Clastosome: a subtype of nuclear body enriched in 19S and 20S proteasomes, ubiquitin, and protein substrates of proteasome.</title>
        <authorList>
            <person name="Lafarga M."/>
            <person name="Berciano M.T."/>
            <person name="Pena E."/>
            <person name="Mayo I."/>
            <person name="Castano J.G."/>
            <person name="Bohmann D."/>
            <person name="Rodrigues J.P."/>
            <person name="Tavanez J.P."/>
            <person name="Carmo-Fonseca M."/>
        </authorList>
    </citation>
    <scope>SUBCELLULAR LOCATION</scope>
</reference>
<reference key="12">
    <citation type="journal article" date="2004" name="Biomacromolecules">
        <title>20S proteasome prevents aggregation of heat-denatured proteins without PA700 regulatory subcomplex like a molecular chaperone.</title>
        <authorList>
            <person name="Yano M."/>
            <person name="Koumoto Y."/>
            <person name="Kanesaki Y."/>
            <person name="Wu X."/>
            <person name="Kido H."/>
        </authorList>
    </citation>
    <scope>FUNCTION</scope>
</reference>
<reference key="13">
    <citation type="journal article" date="2005" name="Nat. Biotechnol.">
        <title>Immunoaffinity profiling of tyrosine phosphorylation in cancer cells.</title>
        <authorList>
            <person name="Rush J."/>
            <person name="Moritz A."/>
            <person name="Lee K.A."/>
            <person name="Guo A."/>
            <person name="Goss V.L."/>
            <person name="Spek E.J."/>
            <person name="Zhang H."/>
            <person name="Zha X.-M."/>
            <person name="Polakiewicz R.D."/>
            <person name="Comb M.J."/>
        </authorList>
    </citation>
    <scope>PHOSPHORYLATION [LARGE SCALE ANALYSIS] AT TYR-24</scope>
    <scope>IDENTIFICATION BY MASS SPECTROMETRY [LARGE SCALE ANALYSIS]</scope>
</reference>
<reference key="14">
    <citation type="journal article" date="2006" name="Cell. Microbiol.">
        <title>Transcriptomic and proteomic analyses of rhabdomyosarcoma cells reveal differential cellular gene expression in response to enterovirus 71 infection.</title>
        <authorList>
            <person name="Leong W.F."/>
            <person name="Chow V.T."/>
        </authorList>
    </citation>
    <scope>INDUCTION</scope>
    <scope>IDENTIFICATION BY MASS SPECTROMETRY</scope>
</reference>
<reference key="15">
    <citation type="journal article" date="2007" name="Biochemistry">
        <title>Mass spectrometric characterization of the affinity-purified human 26S proteasome complex.</title>
        <authorList>
            <person name="Wang X."/>
            <person name="Chen C.-F."/>
            <person name="Baker P.R."/>
            <person name="Chen P.-L."/>
            <person name="Kaiser P."/>
            <person name="Huang L."/>
        </authorList>
    </citation>
    <scope>IDENTIFICATION BY MASS SPECTROMETRY [LARGE SCALE ANALYSIS]</scope>
    <source>
        <tissue>Embryonic kidney</tissue>
    </source>
</reference>
<reference key="16">
    <citation type="journal article" date="2009" name="Anal. Chem.">
        <title>Lys-N and trypsin cover complementary parts of the phosphoproteome in a refined SCX-based approach.</title>
        <authorList>
            <person name="Gauci S."/>
            <person name="Helbig A.O."/>
            <person name="Slijper M."/>
            <person name="Krijgsveld J."/>
            <person name="Heck A.J."/>
            <person name="Mohammed S."/>
        </authorList>
    </citation>
    <scope>ACETYLATION [LARGE SCALE ANALYSIS] AT ALA-2</scope>
    <scope>CLEAVAGE OF INITIATOR METHIONINE [LARGE SCALE ANALYSIS]</scope>
    <scope>IDENTIFICATION BY MASS SPECTROMETRY [LARGE SCALE ANALYSIS]</scope>
</reference>
<reference key="17">
    <citation type="journal article" date="2009" name="Sci. Signal.">
        <title>Quantitative phosphoproteomic analysis of T cell receptor signaling reveals system-wide modulation of protein-protein interactions.</title>
        <authorList>
            <person name="Mayya V."/>
            <person name="Lundgren D.H."/>
            <person name="Hwang S.-I."/>
            <person name="Rezaul K."/>
            <person name="Wu L."/>
            <person name="Eng J.K."/>
            <person name="Rodionov V."/>
            <person name="Han D.K."/>
        </authorList>
    </citation>
    <scope>IDENTIFICATION BY MASS SPECTROMETRY [LARGE SCALE ANALYSIS]</scope>
    <source>
        <tissue>Leukemic T-cell</tissue>
    </source>
</reference>
<reference key="18">
    <citation type="journal article" date="2009" name="Science">
        <title>Lysine acetylation targets protein complexes and co-regulates major cellular functions.</title>
        <authorList>
            <person name="Choudhary C."/>
            <person name="Kumar C."/>
            <person name="Gnad F."/>
            <person name="Nielsen M.L."/>
            <person name="Rehman M."/>
            <person name="Walther T.C."/>
            <person name="Olsen J.V."/>
            <person name="Mann M."/>
        </authorList>
    </citation>
    <scope>ACETYLATION [LARGE SCALE ANALYSIS] AT LYS-70 AND LYS-171</scope>
    <scope>IDENTIFICATION BY MASS SPECTROMETRY [LARGE SCALE ANALYSIS]</scope>
</reference>
<reference key="19">
    <citation type="journal article" date="2011" name="BMC Syst. Biol.">
        <title>Initial characterization of the human central proteome.</title>
        <authorList>
            <person name="Burkard T.R."/>
            <person name="Planyavsky M."/>
            <person name="Kaupe I."/>
            <person name="Breitwieser F.P."/>
            <person name="Buerckstuemmer T."/>
            <person name="Bennett K.L."/>
            <person name="Superti-Furga G."/>
            <person name="Colinge J."/>
        </authorList>
    </citation>
    <scope>IDENTIFICATION BY MASS SPECTROMETRY [LARGE SCALE ANALYSIS]</scope>
</reference>
<reference key="20">
    <citation type="journal article" date="2013" name="Annu. Rev. Biochem.">
        <title>Molecular architecture and assembly of the eukaryotic proteasome.</title>
        <authorList>
            <person name="Tomko R.J. Jr."/>
            <person name="Hochstrasser M."/>
        </authorList>
    </citation>
    <scope>NOMENCLATURE</scope>
</reference>
<reference key="21">
    <citation type="journal article" date="2013" name="J. Proteome Res.">
        <title>Toward a comprehensive characterization of a human cancer cell phosphoproteome.</title>
        <authorList>
            <person name="Zhou H."/>
            <person name="Di Palma S."/>
            <person name="Preisinger C."/>
            <person name="Peng M."/>
            <person name="Polat A.N."/>
            <person name="Heck A.J."/>
            <person name="Mohammed S."/>
        </authorList>
    </citation>
    <scope>PHOSPHORYLATION [LARGE SCALE ANALYSIS] AT SER-7; SER-14; SER-16 AND TYR-76</scope>
    <scope>IDENTIFICATION BY MASS SPECTROMETRY [LARGE SCALE ANALYSIS]</scope>
    <source>
        <tissue>Cervix carcinoma</tissue>
        <tissue>Erythroleukemia</tissue>
    </source>
</reference>
<reference key="22">
    <citation type="journal article" date="2014" name="J. Proteomics">
        <title>An enzyme assisted RP-RPLC approach for in-depth analysis of human liver phosphoproteome.</title>
        <authorList>
            <person name="Bian Y."/>
            <person name="Song C."/>
            <person name="Cheng K."/>
            <person name="Dong M."/>
            <person name="Wang F."/>
            <person name="Huang J."/>
            <person name="Sun D."/>
            <person name="Wang L."/>
            <person name="Ye M."/>
            <person name="Zou H."/>
        </authorList>
    </citation>
    <scope>IDENTIFICATION BY MASS SPECTROMETRY [LARGE SCALE ANALYSIS]</scope>
    <source>
        <tissue>Liver</tissue>
    </source>
</reference>
<reference key="23">
    <citation type="journal article" date="2015" name="Proteomics">
        <title>N-terminome analysis of the human mitochondrial proteome.</title>
        <authorList>
            <person name="Vaca Jacome A.S."/>
            <person name="Rabilloud T."/>
            <person name="Schaeffer-Reiss C."/>
            <person name="Rompais M."/>
            <person name="Ayoub D."/>
            <person name="Lane L."/>
            <person name="Bairoch A."/>
            <person name="Van Dorsselaer A."/>
            <person name="Carapito C."/>
        </authorList>
    </citation>
    <scope>IDENTIFICATION BY MASS SPECTROMETRY [LARGE SCALE ANALYSIS]</scope>
</reference>
<reference key="24">
    <citation type="journal article" date="2016" name="Biol. Chem.">
        <title>Human 20S proteasome activity towards fluorogenic peptides of various chain lengths.</title>
        <authorList>
            <person name="Rut W."/>
            <person name="Drag M."/>
        </authorList>
    </citation>
    <scope>FUNCTION</scope>
    <scope>CATALYTIC ACTIVITY</scope>
</reference>
<reference key="25">
    <citation type="journal article" date="2015" name="Nat. Commun.">
        <title>Cryo-EM reveals the conformation of a substrate analogue in the human 20S proteasome core.</title>
        <authorList>
            <person name="da Fonseca P.C."/>
            <person name="Morris E.P."/>
        </authorList>
    </citation>
    <scope>STRUCTURE BY ELECTRON MICROSCOPY (3.50 ANGSTROMS)</scope>
    <scope>SUBUNIT</scope>
</reference>
<reference key="26">
    <citation type="journal article" date="2015" name="Structure">
        <title>Crystal structure of the human 20S proteasome in complex with carfilzomib.</title>
        <authorList>
            <person name="Harshbarger W."/>
            <person name="Miller C."/>
            <person name="Diedrich C."/>
            <person name="Sacchettini J."/>
        </authorList>
    </citation>
    <scope>X-RAY CRYSTALLOGRAPHY (2.60 ANGSTROMS)</scope>
    <scope>SUBUNIT</scope>
</reference>
<reference key="27">
    <citation type="journal article" date="2016" name="Nat. Struct. Mol. Biol.">
        <title>An atomic structure of the human 26S proteasome.</title>
        <authorList>
            <person name="Huang X."/>
            <person name="Luan B."/>
            <person name="Wu J."/>
            <person name="Shi Y."/>
        </authorList>
    </citation>
    <scope>STRUCTURE BY ELECTRON MICROSCOPY (3.50 ANGSTROMS)</scope>
    <scope>SUBUNIT</scope>
</reference>
<reference key="28">
    <citation type="journal article" date="2016" name="Proc. Natl. Acad. Sci. U.S.A.">
        <title>Structure of the human 26S proteasome at a resolution of 3.9 Aa.</title>
        <authorList>
            <person name="Schweitzer A."/>
            <person name="Aufderheide A."/>
            <person name="Rudack T."/>
            <person name="Beck F."/>
            <person name="Pfeifer G."/>
            <person name="Plitzko J.M."/>
            <person name="Sakata E."/>
            <person name="Schulten K."/>
            <person name="Foerster F."/>
            <person name="Baumeister W."/>
        </authorList>
    </citation>
    <scope>STRUCTURE BY ELECTRON MICROSCOPY (4.02 ANGSTROMS)</scope>
    <scope>SUBUNIT</scope>
</reference>
<reference key="29">
    <citation type="journal article" date="2016" name="Science">
        <title>The inhibition mechanism of human 20S proteasomes enables next-generation inhibitor design.</title>
        <authorList>
            <person name="Schrader J."/>
            <person name="Henneberg F."/>
            <person name="Mata R.A."/>
            <person name="Tittmann K."/>
            <person name="Schneider T.R."/>
            <person name="Stark H."/>
            <person name="Bourenkov G."/>
            <person name="Chari A."/>
        </authorList>
    </citation>
    <scope>X-RAY CRYSTALLOGRAPHY (1.80 ANGSTROMS)</scope>
    <scope>SUBUNIT</scope>
</reference>
<reference key="30">
    <citation type="journal article" date="2021" name="Nature">
        <title>AKIRIN2 controls the nuclear import of proteasomes in vertebrates.</title>
        <authorList>
            <person name="de Almeida M."/>
            <person name="Hinterndorfer M."/>
            <person name="Brunner H."/>
            <person name="Grishkovskaya I."/>
            <person name="Singh K."/>
            <person name="Schleiffer A."/>
            <person name="Jude J."/>
            <person name="Deswal S."/>
            <person name="Kalis R."/>
            <person name="Vunjak M."/>
            <person name="Lendl T."/>
            <person name="Imre R."/>
            <person name="Roitinger E."/>
            <person name="Neumann T."/>
            <person name="Kandolf S."/>
            <person name="Schutzbier M."/>
            <person name="Mechtler K."/>
            <person name="Versteeg G.A."/>
            <person name="Haselbach D."/>
            <person name="Zuber J."/>
        </authorList>
    </citation>
    <scope>STRUCTURE BY ELECTRON MICROSCOPY (2.80 ANGSTROMS) IN COMPLEX WITH AKIRIN2</scope>
    <scope>SUBUNIT</scope>
    <scope>SUBCELLULAR LOCATION</scope>
</reference>
<reference key="31">
    <citation type="journal article" date="2006" name="Science">
        <title>The consensus coding sequences of human breast and colorectal cancers.</title>
        <authorList>
            <person name="Sjoeblom T."/>
            <person name="Jones S."/>
            <person name="Wood L.D."/>
            <person name="Parsons D.W."/>
            <person name="Lin J."/>
            <person name="Barber T.D."/>
            <person name="Mandelker D."/>
            <person name="Leary R.J."/>
            <person name="Ptak J."/>
            <person name="Silliman N."/>
            <person name="Szabo S."/>
            <person name="Buckhaults P."/>
            <person name="Farrell C."/>
            <person name="Meeh P."/>
            <person name="Markowitz S.D."/>
            <person name="Willis J."/>
            <person name="Dawson D."/>
            <person name="Willson J.K.V."/>
            <person name="Gazdar A.F."/>
            <person name="Hartigan J."/>
            <person name="Wu L."/>
            <person name="Liu C."/>
            <person name="Parmigiani G."/>
            <person name="Park B.H."/>
            <person name="Bachman K.E."/>
            <person name="Papadopoulos N."/>
            <person name="Vogelstein B."/>
            <person name="Kinzler K.W."/>
            <person name="Velculescu V.E."/>
        </authorList>
    </citation>
    <scope>VARIANT [LARGE SCALE ANALYSIS] VAL-110</scope>
</reference>
<proteinExistence type="evidence at protein level"/>
<dbReference type="EMBL" id="D00760">
    <property type="protein sequence ID" value="BAA00657.1"/>
    <property type="molecule type" value="mRNA"/>
</dbReference>
<dbReference type="EMBL" id="AK290654">
    <property type="protein sequence ID" value="BAF83343.1"/>
    <property type="molecule type" value="mRNA"/>
</dbReference>
<dbReference type="EMBL" id="CR450317">
    <property type="protein sequence ID" value="CAG29313.1"/>
    <property type="molecule type" value="mRNA"/>
</dbReference>
<dbReference type="EMBL" id="CH236951">
    <property type="protein sequence ID" value="EAL24005.1"/>
    <property type="molecule type" value="Genomic_DNA"/>
</dbReference>
<dbReference type="EMBL" id="CH471073">
    <property type="protein sequence ID" value="EAW94152.1"/>
    <property type="molecule type" value="Genomic_DNA"/>
</dbReference>
<dbReference type="EMBL" id="BC002900">
    <property type="protein sequence ID" value="AAH02900.2"/>
    <property type="molecule type" value="mRNA"/>
</dbReference>
<dbReference type="EMBL" id="BC047697">
    <property type="protein sequence ID" value="AAH47697.1"/>
    <property type="molecule type" value="mRNA"/>
</dbReference>
<dbReference type="CCDS" id="CCDS5467.1"/>
<dbReference type="PIR" id="S15970">
    <property type="entry name" value="SNHUC3"/>
</dbReference>
<dbReference type="RefSeq" id="NP_002778.1">
    <property type="nucleotide sequence ID" value="NM_002787.5"/>
</dbReference>
<dbReference type="PDB" id="4R3O">
    <property type="method" value="X-ray"/>
    <property type="resolution" value="2.60 A"/>
    <property type="chains" value="B/P=2-234"/>
</dbReference>
<dbReference type="PDB" id="4R67">
    <property type="method" value="X-ray"/>
    <property type="resolution" value="2.89 A"/>
    <property type="chains" value="B/P/d/r=2-234"/>
</dbReference>
<dbReference type="PDB" id="5A0Q">
    <property type="method" value="EM"/>
    <property type="resolution" value="3.50 A"/>
    <property type="chains" value="B/P=1-234"/>
</dbReference>
<dbReference type="PDB" id="5GJQ">
    <property type="method" value="EM"/>
    <property type="resolution" value="4.50 A"/>
    <property type="chains" value="C/i=1-234"/>
</dbReference>
<dbReference type="PDB" id="5GJR">
    <property type="method" value="EM"/>
    <property type="resolution" value="3.50 A"/>
    <property type="chains" value="C/i=1-234"/>
</dbReference>
<dbReference type="PDB" id="5L4G">
    <property type="method" value="EM"/>
    <property type="resolution" value="4.02 A"/>
    <property type="chains" value="B/O=1-234"/>
</dbReference>
<dbReference type="PDB" id="5LE5">
    <property type="method" value="X-ray"/>
    <property type="resolution" value="1.80 A"/>
    <property type="chains" value="A/O=1-234"/>
</dbReference>
<dbReference type="PDB" id="5LEX">
    <property type="method" value="X-ray"/>
    <property type="resolution" value="2.20 A"/>
    <property type="chains" value="A/O=1-234"/>
</dbReference>
<dbReference type="PDB" id="5LEY">
    <property type="method" value="X-ray"/>
    <property type="resolution" value="1.90 A"/>
    <property type="chains" value="A/O=1-234"/>
</dbReference>
<dbReference type="PDB" id="5LEZ">
    <property type="method" value="X-ray"/>
    <property type="resolution" value="2.19 A"/>
    <property type="chains" value="A/O=1-234"/>
</dbReference>
<dbReference type="PDB" id="5LF0">
    <property type="method" value="X-ray"/>
    <property type="resolution" value="2.41 A"/>
    <property type="chains" value="A/O=1-234"/>
</dbReference>
<dbReference type="PDB" id="5LF1">
    <property type="method" value="X-ray"/>
    <property type="resolution" value="2.00 A"/>
    <property type="chains" value="A/O=1-234"/>
</dbReference>
<dbReference type="PDB" id="5LF3">
    <property type="method" value="X-ray"/>
    <property type="resolution" value="2.10 A"/>
    <property type="chains" value="A/O=1-234"/>
</dbReference>
<dbReference type="PDB" id="5LF4">
    <property type="method" value="X-ray"/>
    <property type="resolution" value="1.99 A"/>
    <property type="chains" value="A/O=1-234"/>
</dbReference>
<dbReference type="PDB" id="5LF6">
    <property type="method" value="X-ray"/>
    <property type="resolution" value="2.07 A"/>
    <property type="chains" value="A/O=1-234"/>
</dbReference>
<dbReference type="PDB" id="5LF7">
    <property type="method" value="X-ray"/>
    <property type="resolution" value="2.00 A"/>
    <property type="chains" value="A/O=1-234"/>
</dbReference>
<dbReference type="PDB" id="5LN3">
    <property type="method" value="EM"/>
    <property type="resolution" value="6.80 A"/>
    <property type="chains" value="B=1-234"/>
</dbReference>
<dbReference type="PDB" id="5M32">
    <property type="method" value="EM"/>
    <property type="resolution" value="3.80 A"/>
    <property type="chains" value="A/O=1-234"/>
</dbReference>
<dbReference type="PDB" id="5T0C">
    <property type="method" value="EM"/>
    <property type="resolution" value="3.80 A"/>
    <property type="chains" value="AH/BH=2-234"/>
</dbReference>
<dbReference type="PDB" id="5T0G">
    <property type="method" value="EM"/>
    <property type="resolution" value="4.40 A"/>
    <property type="chains" value="H=2-234"/>
</dbReference>
<dbReference type="PDB" id="5T0H">
    <property type="method" value="EM"/>
    <property type="resolution" value="6.80 A"/>
    <property type="chains" value="H=2-234"/>
</dbReference>
<dbReference type="PDB" id="5T0I">
    <property type="method" value="EM"/>
    <property type="resolution" value="8.00 A"/>
    <property type="chains" value="H=2-234"/>
</dbReference>
<dbReference type="PDB" id="5T0J">
    <property type="method" value="EM"/>
    <property type="resolution" value="8.00 A"/>
    <property type="chains" value="H=2-234"/>
</dbReference>
<dbReference type="PDB" id="5VFO">
    <property type="method" value="EM"/>
    <property type="resolution" value="3.50 A"/>
    <property type="chains" value="H/h=3-234"/>
</dbReference>
<dbReference type="PDB" id="5VFP">
    <property type="method" value="EM"/>
    <property type="resolution" value="4.20 A"/>
    <property type="chains" value="H/h=3-234"/>
</dbReference>
<dbReference type="PDB" id="5VFQ">
    <property type="method" value="EM"/>
    <property type="resolution" value="4.20 A"/>
    <property type="chains" value="H/h=3-234"/>
</dbReference>
<dbReference type="PDB" id="5VFR">
    <property type="method" value="EM"/>
    <property type="resolution" value="4.90 A"/>
    <property type="chains" value="H/h=3-234"/>
</dbReference>
<dbReference type="PDB" id="5VFS">
    <property type="method" value="EM"/>
    <property type="resolution" value="3.60 A"/>
    <property type="chains" value="H/h=3-234"/>
</dbReference>
<dbReference type="PDB" id="5VFT">
    <property type="method" value="EM"/>
    <property type="resolution" value="7.00 A"/>
    <property type="chains" value="H/h=3-234"/>
</dbReference>
<dbReference type="PDB" id="5VFU">
    <property type="method" value="EM"/>
    <property type="resolution" value="5.80 A"/>
    <property type="chains" value="H/h=3-234"/>
</dbReference>
<dbReference type="PDB" id="6AVO">
    <property type="method" value="EM"/>
    <property type="resolution" value="3.80 A"/>
    <property type="chains" value="P/b=1-234"/>
</dbReference>
<dbReference type="PDB" id="6E5B">
    <property type="method" value="X-ray"/>
    <property type="resolution" value="2.77 A"/>
    <property type="chains" value="A/O=1-234"/>
</dbReference>
<dbReference type="PDB" id="6KWY">
    <property type="method" value="EM"/>
    <property type="resolution" value="2.72 A"/>
    <property type="chains" value="A/O=1-234"/>
</dbReference>
<dbReference type="PDB" id="6MSB">
    <property type="method" value="EM"/>
    <property type="resolution" value="3.00 A"/>
    <property type="chains" value="H/h=2-234"/>
</dbReference>
<dbReference type="PDB" id="6MSD">
    <property type="method" value="EM"/>
    <property type="resolution" value="3.20 A"/>
    <property type="chains" value="H/h=2-234"/>
</dbReference>
<dbReference type="PDB" id="6MSE">
    <property type="method" value="EM"/>
    <property type="resolution" value="3.30 A"/>
    <property type="chains" value="V=21-102"/>
</dbReference>
<dbReference type="PDB" id="6MSG">
    <property type="method" value="EM"/>
    <property type="resolution" value="3.50 A"/>
    <property type="chains" value="H/h=2-234"/>
</dbReference>
<dbReference type="PDB" id="6MSH">
    <property type="method" value="EM"/>
    <property type="resolution" value="3.60 A"/>
    <property type="chains" value="H/h=2-234"/>
</dbReference>
<dbReference type="PDB" id="6MSJ">
    <property type="method" value="EM"/>
    <property type="resolution" value="3.30 A"/>
    <property type="chains" value="H/h=2-234"/>
</dbReference>
<dbReference type="PDB" id="6MSK">
    <property type="method" value="EM"/>
    <property type="resolution" value="3.20 A"/>
    <property type="chains" value="H/h=2-234"/>
</dbReference>
<dbReference type="PDB" id="6R70">
    <property type="method" value="EM"/>
    <property type="resolution" value="3.50 A"/>
    <property type="chains" value="A/O=4-233"/>
</dbReference>
<dbReference type="PDB" id="6REY">
    <property type="method" value="EM"/>
    <property type="resolution" value="3.00 A"/>
    <property type="chains" value="B/P=1-234"/>
</dbReference>
<dbReference type="PDB" id="6RGQ">
    <property type="method" value="EM"/>
    <property type="resolution" value="2.60 A"/>
    <property type="chains" value="B/P=1-234"/>
</dbReference>
<dbReference type="PDB" id="6WJD">
    <property type="method" value="EM"/>
    <property type="resolution" value="4.80 A"/>
    <property type="chains" value="H/h=2-234"/>
</dbReference>
<dbReference type="PDB" id="6WJN">
    <property type="method" value="EM"/>
    <property type="resolution" value="5.70 A"/>
    <property type="chains" value="H/h=3-234"/>
</dbReference>
<dbReference type="PDB" id="6XMJ">
    <property type="method" value="EM"/>
    <property type="resolution" value="3.00 A"/>
    <property type="chains" value="B=2-234"/>
</dbReference>
<dbReference type="PDB" id="7AWE">
    <property type="method" value="X-ray"/>
    <property type="resolution" value="2.29 A"/>
    <property type="chains" value="B/P=5-233"/>
</dbReference>
<dbReference type="PDB" id="7B12">
    <property type="method" value="X-ray"/>
    <property type="resolution" value="2.43 A"/>
    <property type="chains" value="B/P=5-233"/>
</dbReference>
<dbReference type="PDB" id="7LXV">
    <property type="method" value="EM"/>
    <property type="resolution" value="3.40 A"/>
    <property type="chains" value="A/O=1-234"/>
</dbReference>
<dbReference type="PDB" id="7NAN">
    <property type="method" value="EM"/>
    <property type="resolution" value="2.80 A"/>
    <property type="chains" value="A/O=1-234"/>
</dbReference>
<dbReference type="PDB" id="7NAO">
    <property type="method" value="EM"/>
    <property type="resolution" value="2.90 A"/>
    <property type="chains" value="A/O=1-234"/>
</dbReference>
<dbReference type="PDB" id="7NAP">
    <property type="method" value="EM"/>
    <property type="resolution" value="3.20 A"/>
    <property type="chains" value="A/O=1-234"/>
</dbReference>
<dbReference type="PDB" id="7NAQ">
    <property type="method" value="EM"/>
    <property type="resolution" value="3.20 A"/>
    <property type="chains" value="A/O=1-234"/>
</dbReference>
<dbReference type="PDB" id="7NHT">
    <property type="method" value="EM"/>
    <property type="resolution" value="2.80 A"/>
    <property type="chains" value="A=1-234"/>
</dbReference>
<dbReference type="PDB" id="7PG9">
    <property type="method" value="EM"/>
    <property type="resolution" value="3.70 A"/>
    <property type="chains" value="B/P=1-234"/>
</dbReference>
<dbReference type="PDB" id="7QXN">
    <property type="method" value="EM"/>
    <property type="resolution" value="3.70 A"/>
    <property type="chains" value="H/h=2-234"/>
</dbReference>
<dbReference type="PDB" id="7QXP">
    <property type="method" value="EM"/>
    <property type="resolution" value="3.60 A"/>
    <property type="chains" value="H/h=2-234"/>
</dbReference>
<dbReference type="PDB" id="7QXU">
    <property type="method" value="EM"/>
    <property type="resolution" value="4.30 A"/>
    <property type="chains" value="H/h=2-234"/>
</dbReference>
<dbReference type="PDB" id="7QXW">
    <property type="method" value="EM"/>
    <property type="resolution" value="4.10 A"/>
    <property type="chains" value="H/h=2-234"/>
</dbReference>
<dbReference type="PDB" id="7QXX">
    <property type="method" value="EM"/>
    <property type="resolution" value="4.40 A"/>
    <property type="chains" value="H/h=2-234"/>
</dbReference>
<dbReference type="PDB" id="7QY7">
    <property type="method" value="EM"/>
    <property type="resolution" value="4.70 A"/>
    <property type="chains" value="H/h=2-234"/>
</dbReference>
<dbReference type="PDB" id="7QYA">
    <property type="method" value="EM"/>
    <property type="resolution" value="4.80 A"/>
    <property type="chains" value="H/h=2-234"/>
</dbReference>
<dbReference type="PDB" id="7QYB">
    <property type="method" value="EM"/>
    <property type="resolution" value="4.10 A"/>
    <property type="chains" value="H/h=2-234"/>
</dbReference>
<dbReference type="PDB" id="7V5G">
    <property type="method" value="EM"/>
    <property type="resolution" value="4.47 A"/>
    <property type="chains" value="P/W=1-234"/>
</dbReference>
<dbReference type="PDB" id="7V5M">
    <property type="method" value="EM"/>
    <property type="resolution" value="3.88 A"/>
    <property type="chains" value="B/P=1-234"/>
</dbReference>
<dbReference type="PDB" id="7W37">
    <property type="method" value="EM"/>
    <property type="resolution" value="3.00 A"/>
    <property type="chains" value="H/h=1-234"/>
</dbReference>
<dbReference type="PDB" id="7W38">
    <property type="method" value="EM"/>
    <property type="resolution" value="3.10 A"/>
    <property type="chains" value="H/h=1-234"/>
</dbReference>
<dbReference type="PDB" id="7W39">
    <property type="method" value="EM"/>
    <property type="resolution" value="3.20 A"/>
    <property type="chains" value="H/h=1-234"/>
</dbReference>
<dbReference type="PDB" id="7W3A">
    <property type="method" value="EM"/>
    <property type="resolution" value="3.50 A"/>
    <property type="chains" value="H/h=1-234"/>
</dbReference>
<dbReference type="PDB" id="7W3B">
    <property type="method" value="EM"/>
    <property type="resolution" value="3.60 A"/>
    <property type="chains" value="H/h=1-234"/>
</dbReference>
<dbReference type="PDB" id="7W3C">
    <property type="method" value="EM"/>
    <property type="resolution" value="3.40 A"/>
    <property type="chains" value="H/h=1-234"/>
</dbReference>
<dbReference type="PDB" id="7W3F">
    <property type="method" value="EM"/>
    <property type="resolution" value="3.30 A"/>
    <property type="chains" value="H/h=1-234"/>
</dbReference>
<dbReference type="PDB" id="7W3G">
    <property type="method" value="EM"/>
    <property type="resolution" value="3.20 A"/>
    <property type="chains" value="H/h=1-234"/>
</dbReference>
<dbReference type="PDB" id="7W3H">
    <property type="method" value="EM"/>
    <property type="resolution" value="3.20 A"/>
    <property type="chains" value="H/h=1-234"/>
</dbReference>
<dbReference type="PDB" id="7W3I">
    <property type="method" value="EM"/>
    <property type="resolution" value="3.50 A"/>
    <property type="chains" value="H/h=1-234"/>
</dbReference>
<dbReference type="PDB" id="7W3J">
    <property type="method" value="EM"/>
    <property type="resolution" value="3.50 A"/>
    <property type="chains" value="H/h=1-234"/>
</dbReference>
<dbReference type="PDB" id="7W3K">
    <property type="method" value="EM"/>
    <property type="resolution" value="3.60 A"/>
    <property type="chains" value="H/h=1-234"/>
</dbReference>
<dbReference type="PDB" id="7W3M">
    <property type="method" value="EM"/>
    <property type="resolution" value="3.50 A"/>
    <property type="chains" value="H/h=1-234"/>
</dbReference>
<dbReference type="PDB" id="8BZL">
    <property type="method" value="X-ray"/>
    <property type="resolution" value="2.14 A"/>
    <property type="chains" value="A/O=1-234"/>
</dbReference>
<dbReference type="PDB" id="8CVR">
    <property type="method" value="EM"/>
    <property type="resolution" value="2.70 A"/>
    <property type="chains" value="B/P=1-234"/>
</dbReference>
<dbReference type="PDB" id="8CVS">
    <property type="method" value="EM"/>
    <property type="resolution" value="3.10 A"/>
    <property type="chains" value="A/O=1-234"/>
</dbReference>
<dbReference type="PDB" id="8CVT">
    <property type="method" value="EM"/>
    <property type="resolution" value="3.00 A"/>
    <property type="chains" value="H/h=1-234"/>
</dbReference>
<dbReference type="PDB" id="8CXB">
    <property type="method" value="EM"/>
    <property type="resolution" value="2.90 A"/>
    <property type="chains" value="A/O=1-234"/>
</dbReference>
<dbReference type="PDB" id="8JRI">
    <property type="method" value="EM"/>
    <property type="resolution" value="3.40 A"/>
    <property type="chains" value="H=1-234"/>
</dbReference>
<dbReference type="PDB" id="8JRT">
    <property type="method" value="EM"/>
    <property type="resolution" value="3.60 A"/>
    <property type="chains" value="H=1-234"/>
</dbReference>
<dbReference type="PDB" id="8JTI">
    <property type="method" value="EM"/>
    <property type="resolution" value="3.80 A"/>
    <property type="chains" value="H=1-234"/>
</dbReference>
<dbReference type="PDB" id="8K0G">
    <property type="method" value="EM"/>
    <property type="resolution" value="3.80 A"/>
    <property type="chains" value="H=1-234"/>
</dbReference>
<dbReference type="PDB" id="8QYJ">
    <property type="method" value="EM"/>
    <property type="resolution" value="2.73 A"/>
    <property type="chains" value="A=1-234"/>
</dbReference>
<dbReference type="PDB" id="8QYL">
    <property type="method" value="EM"/>
    <property type="resolution" value="2.67 A"/>
    <property type="chains" value="A=1-234"/>
</dbReference>
<dbReference type="PDB" id="8QYM">
    <property type="method" value="EM"/>
    <property type="resolution" value="2.73 A"/>
    <property type="chains" value="A=1-234"/>
</dbReference>
<dbReference type="PDB" id="8QYN">
    <property type="method" value="EM"/>
    <property type="resolution" value="2.88 A"/>
    <property type="chains" value="A=1-234"/>
</dbReference>
<dbReference type="PDB" id="8QYO">
    <property type="method" value="EM"/>
    <property type="resolution" value="2.84 A"/>
    <property type="chains" value="A/O=1-234"/>
</dbReference>
<dbReference type="PDB" id="8QYS">
    <property type="method" value="EM"/>
    <property type="resolution" value="3.89 A"/>
    <property type="chains" value="A/R=1-234"/>
</dbReference>
<dbReference type="PDB" id="8QZ9">
    <property type="method" value="EM"/>
    <property type="resolution" value="2.95 A"/>
    <property type="chains" value="A=1-234"/>
</dbReference>
<dbReference type="PDB" id="8TM3">
    <property type="method" value="EM"/>
    <property type="resolution" value="3.00 A"/>
    <property type="chains" value="A=1-234"/>
</dbReference>
<dbReference type="PDB" id="8TM4">
    <property type="method" value="EM"/>
    <property type="resolution" value="3.00 A"/>
    <property type="chains" value="A=1-234"/>
</dbReference>
<dbReference type="PDB" id="8TM5">
    <property type="method" value="EM"/>
    <property type="resolution" value="3.00 A"/>
    <property type="chains" value="A=1-234"/>
</dbReference>
<dbReference type="PDB" id="8TM6">
    <property type="method" value="EM"/>
    <property type="resolution" value="2.80 A"/>
    <property type="chains" value="A/O=1-234"/>
</dbReference>
<dbReference type="PDB" id="8UD9">
    <property type="method" value="EM"/>
    <property type="resolution" value="2.04 A"/>
    <property type="chains" value="B/P=1-234"/>
</dbReference>
<dbReference type="PDB" id="8USB">
    <property type="method" value="EM"/>
    <property type="resolution" value="2.73 A"/>
    <property type="chains" value="H=1-234"/>
</dbReference>
<dbReference type="PDB" id="8USC">
    <property type="method" value="EM"/>
    <property type="resolution" value="3.10 A"/>
    <property type="chains" value="H=1-234"/>
</dbReference>
<dbReference type="PDB" id="8YIX">
    <property type="method" value="EM"/>
    <property type="resolution" value="2.91 A"/>
    <property type="chains" value="A=1-234"/>
</dbReference>
<dbReference type="PDB" id="8YIY">
    <property type="method" value="EM"/>
    <property type="resolution" value="3.41 A"/>
    <property type="chains" value="A/O=1-234"/>
</dbReference>
<dbReference type="PDB" id="8YIZ">
    <property type="method" value="EM"/>
    <property type="resolution" value="3.79 A"/>
    <property type="chains" value="A/O=1-234"/>
</dbReference>
<dbReference type="PDB" id="9E8G">
    <property type="method" value="EM"/>
    <property type="resolution" value="3.01 A"/>
    <property type="chains" value="H=1-234"/>
</dbReference>
<dbReference type="PDB" id="9E8H">
    <property type="method" value="EM"/>
    <property type="resolution" value="2.90 A"/>
    <property type="chains" value="H=1-234"/>
</dbReference>
<dbReference type="PDB" id="9E8I">
    <property type="method" value="EM"/>
    <property type="resolution" value="2.87 A"/>
    <property type="chains" value="H=1-234"/>
</dbReference>
<dbReference type="PDB" id="9E8J">
    <property type="method" value="EM"/>
    <property type="resolution" value="3.47 A"/>
    <property type="chains" value="H=1-234"/>
</dbReference>
<dbReference type="PDB" id="9E8K">
    <property type="method" value="EM"/>
    <property type="resolution" value="4.08 A"/>
    <property type="chains" value="H=1-234"/>
</dbReference>
<dbReference type="PDB" id="9E8L">
    <property type="method" value="EM"/>
    <property type="resolution" value="3.59 A"/>
    <property type="chains" value="H=1-234"/>
</dbReference>
<dbReference type="PDB" id="9E8N">
    <property type="method" value="EM"/>
    <property type="resolution" value="3.62 A"/>
    <property type="chains" value="H=1-234"/>
</dbReference>
<dbReference type="PDB" id="9E8O">
    <property type="method" value="EM"/>
    <property type="resolution" value="3.10 A"/>
    <property type="chains" value="H=1-234"/>
</dbReference>
<dbReference type="PDB" id="9E8Q">
    <property type="method" value="EM"/>
    <property type="resolution" value="3.16 A"/>
    <property type="chains" value="H=1-234"/>
</dbReference>
<dbReference type="PDB" id="9HMN">
    <property type="method" value="EM"/>
    <property type="resolution" value="2.55 A"/>
    <property type="chains" value="B/P=2-234"/>
</dbReference>
<dbReference type="PDBsum" id="4R3O"/>
<dbReference type="PDBsum" id="4R67"/>
<dbReference type="PDBsum" id="5A0Q"/>
<dbReference type="PDBsum" id="5GJQ"/>
<dbReference type="PDBsum" id="5GJR"/>
<dbReference type="PDBsum" id="5L4G"/>
<dbReference type="PDBsum" id="5LE5"/>
<dbReference type="PDBsum" id="5LEX"/>
<dbReference type="PDBsum" id="5LEY"/>
<dbReference type="PDBsum" id="5LEZ"/>
<dbReference type="PDBsum" id="5LF0"/>
<dbReference type="PDBsum" id="5LF1"/>
<dbReference type="PDBsum" id="5LF3"/>
<dbReference type="PDBsum" id="5LF4"/>
<dbReference type="PDBsum" id="5LF6"/>
<dbReference type="PDBsum" id="5LF7"/>
<dbReference type="PDBsum" id="5LN3"/>
<dbReference type="PDBsum" id="5M32"/>
<dbReference type="PDBsum" id="5T0C"/>
<dbReference type="PDBsum" id="5T0G"/>
<dbReference type="PDBsum" id="5T0H"/>
<dbReference type="PDBsum" id="5T0I"/>
<dbReference type="PDBsum" id="5T0J"/>
<dbReference type="PDBsum" id="5VFO"/>
<dbReference type="PDBsum" id="5VFP"/>
<dbReference type="PDBsum" id="5VFQ"/>
<dbReference type="PDBsum" id="5VFR"/>
<dbReference type="PDBsum" id="5VFS"/>
<dbReference type="PDBsum" id="5VFT"/>
<dbReference type="PDBsum" id="5VFU"/>
<dbReference type="PDBsum" id="6AVO"/>
<dbReference type="PDBsum" id="6E5B"/>
<dbReference type="PDBsum" id="6KWY"/>
<dbReference type="PDBsum" id="6MSB"/>
<dbReference type="PDBsum" id="6MSD"/>
<dbReference type="PDBsum" id="6MSE"/>
<dbReference type="PDBsum" id="6MSG"/>
<dbReference type="PDBsum" id="6MSH"/>
<dbReference type="PDBsum" id="6MSJ"/>
<dbReference type="PDBsum" id="6MSK"/>
<dbReference type="PDBsum" id="6R70"/>
<dbReference type="PDBsum" id="6REY"/>
<dbReference type="PDBsum" id="6RGQ"/>
<dbReference type="PDBsum" id="6WJD"/>
<dbReference type="PDBsum" id="6WJN"/>
<dbReference type="PDBsum" id="6XMJ"/>
<dbReference type="PDBsum" id="7AWE"/>
<dbReference type="PDBsum" id="7B12"/>
<dbReference type="PDBsum" id="7LXV"/>
<dbReference type="PDBsum" id="7NAN"/>
<dbReference type="PDBsum" id="7NAO"/>
<dbReference type="PDBsum" id="7NAP"/>
<dbReference type="PDBsum" id="7NAQ"/>
<dbReference type="PDBsum" id="7NHT"/>
<dbReference type="PDBsum" id="7PG9"/>
<dbReference type="PDBsum" id="7QXN"/>
<dbReference type="PDBsum" id="7QXP"/>
<dbReference type="PDBsum" id="7QXU"/>
<dbReference type="PDBsum" id="7QXW"/>
<dbReference type="PDBsum" id="7QXX"/>
<dbReference type="PDBsum" id="7QY7"/>
<dbReference type="PDBsum" id="7QYA"/>
<dbReference type="PDBsum" id="7QYB"/>
<dbReference type="PDBsum" id="7V5G"/>
<dbReference type="PDBsum" id="7V5M"/>
<dbReference type="PDBsum" id="7W37"/>
<dbReference type="PDBsum" id="7W38"/>
<dbReference type="PDBsum" id="7W39"/>
<dbReference type="PDBsum" id="7W3A"/>
<dbReference type="PDBsum" id="7W3B"/>
<dbReference type="PDBsum" id="7W3C"/>
<dbReference type="PDBsum" id="7W3F"/>
<dbReference type="PDBsum" id="7W3G"/>
<dbReference type="PDBsum" id="7W3H"/>
<dbReference type="PDBsum" id="7W3I"/>
<dbReference type="PDBsum" id="7W3J"/>
<dbReference type="PDBsum" id="7W3K"/>
<dbReference type="PDBsum" id="7W3M"/>
<dbReference type="PDBsum" id="8BZL"/>
<dbReference type="PDBsum" id="8CVR"/>
<dbReference type="PDBsum" id="8CVS"/>
<dbReference type="PDBsum" id="8CVT"/>
<dbReference type="PDBsum" id="8CXB"/>
<dbReference type="PDBsum" id="8JRI"/>
<dbReference type="PDBsum" id="8JRT"/>
<dbReference type="PDBsum" id="8JTI"/>
<dbReference type="PDBsum" id="8K0G"/>
<dbReference type="PDBsum" id="8QYJ"/>
<dbReference type="PDBsum" id="8QYL"/>
<dbReference type="PDBsum" id="8QYM"/>
<dbReference type="PDBsum" id="8QYN"/>
<dbReference type="PDBsum" id="8QYO"/>
<dbReference type="PDBsum" id="8QYS"/>
<dbReference type="PDBsum" id="8QZ9"/>
<dbReference type="PDBsum" id="8TM3"/>
<dbReference type="PDBsum" id="8TM4"/>
<dbReference type="PDBsum" id="8TM5"/>
<dbReference type="PDBsum" id="8TM6"/>
<dbReference type="PDBsum" id="8UD9"/>
<dbReference type="PDBsum" id="8USB"/>
<dbReference type="PDBsum" id="8USC"/>
<dbReference type="PDBsum" id="8YIX"/>
<dbReference type="PDBsum" id="8YIY"/>
<dbReference type="PDBsum" id="8YIZ"/>
<dbReference type="PDBsum" id="9E8G"/>
<dbReference type="PDBsum" id="9E8H"/>
<dbReference type="PDBsum" id="9E8I"/>
<dbReference type="PDBsum" id="9E8J"/>
<dbReference type="PDBsum" id="9E8K"/>
<dbReference type="PDBsum" id="9E8L"/>
<dbReference type="PDBsum" id="9E8N"/>
<dbReference type="PDBsum" id="9E8O"/>
<dbReference type="PDBsum" id="9E8Q"/>
<dbReference type="PDBsum" id="9HMN"/>
<dbReference type="EMDB" id="EMD-0781"/>
<dbReference type="EMDB" id="EMD-12341"/>
<dbReference type="EMDB" id="EMD-13389"/>
<dbReference type="EMDB" id="EMD-14201"/>
<dbReference type="EMDB" id="EMD-14202"/>
<dbReference type="EMDB" id="EMD-14203"/>
<dbReference type="EMDB" id="EMD-14204"/>
<dbReference type="EMDB" id="EMD-14205"/>
<dbReference type="EMDB" id="EMD-14209"/>
<dbReference type="EMDB" id="EMD-14210"/>
<dbReference type="EMDB" id="EMD-14211"/>
<dbReference type="EMDB" id="EMD-18755"/>
<dbReference type="EMDB" id="EMD-18757"/>
<dbReference type="EMDB" id="EMD-18758"/>
<dbReference type="EMDB" id="EMD-18759"/>
<dbReference type="EMDB" id="EMD-18760"/>
<dbReference type="EMDB" id="EMD-18761"/>
<dbReference type="EMDB" id="EMD-18773"/>
<dbReference type="EMDB" id="EMD-21691"/>
<dbReference type="EMDB" id="EMD-21696"/>
<dbReference type="EMDB" id="EMD-22259"/>
<dbReference type="EMDB" id="EMD-23576"/>
<dbReference type="EMDB" id="EMD-24275"/>
<dbReference type="EMDB" id="EMD-24276"/>
<dbReference type="EMDB" id="EMD-24277"/>
<dbReference type="EMDB" id="EMD-24278"/>
<dbReference type="EMDB" id="EMD-27013"/>
<dbReference type="EMDB" id="EMD-27015"/>
<dbReference type="EMDB" id="EMD-27018"/>
<dbReference type="EMDB" id="EMD-2981"/>
<dbReference type="EMDB" id="EMD-31724"/>
<dbReference type="EMDB" id="EMD-31727"/>
<dbReference type="EMDB" id="EMD-32272"/>
<dbReference type="EMDB" id="EMD-32273"/>
<dbReference type="EMDB" id="EMD-32274"/>
<dbReference type="EMDB" id="EMD-32275"/>
<dbReference type="EMDB" id="EMD-32276"/>
<dbReference type="EMDB" id="EMD-32277"/>
<dbReference type="EMDB" id="EMD-32278"/>
<dbReference type="EMDB" id="EMD-32279"/>
<dbReference type="EMDB" id="EMD-32280"/>
<dbReference type="EMDB" id="EMD-32281"/>
<dbReference type="EMDB" id="EMD-32282"/>
<dbReference type="EMDB" id="EMD-32283"/>
<dbReference type="EMDB" id="EMD-32284"/>
<dbReference type="EMDB" id="EMD-36598"/>
<dbReference type="EMDB" id="EMD-36605"/>
<dbReference type="EMDB" id="EMD-36645"/>
<dbReference type="EMDB" id="EMD-36764"/>
<dbReference type="EMDB" id="EMD-39332"/>
<dbReference type="EMDB" id="EMD-39333"/>
<dbReference type="EMDB" id="EMD-39334"/>
<dbReference type="EMDB" id="EMD-4089"/>
<dbReference type="EMDB" id="EMD-41377"/>
<dbReference type="EMDB" id="EMD-41378"/>
<dbReference type="EMDB" id="EMD-41379"/>
<dbReference type="EMDB" id="EMD-41380"/>
<dbReference type="EMDB" id="EMD-4146"/>
<dbReference type="EMDB" id="EMD-42148"/>
<dbReference type="EMDB" id="EMD-42506"/>
<dbReference type="EMDB" id="EMD-42507"/>
<dbReference type="EMDB" id="EMD-4738"/>
<dbReference type="EMDB" id="EMD-47719"/>
<dbReference type="EMDB" id="EMD-47720"/>
<dbReference type="EMDB" id="EMD-47721"/>
<dbReference type="EMDB" id="EMD-47722"/>
<dbReference type="EMDB" id="EMD-47723"/>
<dbReference type="EMDB" id="EMD-47724"/>
<dbReference type="EMDB" id="EMD-47725"/>
<dbReference type="EMDB" id="EMD-47726"/>
<dbReference type="EMDB" id="EMD-47727"/>
<dbReference type="EMDB" id="EMD-4860"/>
<dbReference type="EMDB" id="EMD-4877"/>
<dbReference type="EMDB" id="EMD-52296"/>
<dbReference type="EMDB" id="EMD-60138"/>
<dbReference type="EMDB" id="EMD-60139"/>
<dbReference type="EMDB" id="EMD-7010"/>
<dbReference type="EMDB" id="EMD-8662"/>
<dbReference type="EMDB" id="EMD-8663"/>
<dbReference type="EMDB" id="EMD-8664"/>
<dbReference type="EMDB" id="EMD-8665"/>
<dbReference type="EMDB" id="EMD-8666"/>
<dbReference type="EMDB" id="EMD-8667"/>
<dbReference type="EMDB" id="EMD-8668"/>
<dbReference type="EMDB" id="EMD-9216"/>
<dbReference type="EMDB" id="EMD-9217"/>
<dbReference type="EMDB" id="EMD-9218"/>
<dbReference type="EMDB" id="EMD-9219"/>
<dbReference type="EMDB" id="EMD-9220"/>
<dbReference type="EMDB" id="EMD-9221"/>
<dbReference type="EMDB" id="EMD-9222"/>
<dbReference type="EMDB" id="EMD-9511"/>
<dbReference type="EMDB" id="EMD-9512"/>
<dbReference type="SMR" id="P25787"/>
<dbReference type="BioGRID" id="111656">
    <property type="interactions" value="230"/>
</dbReference>
<dbReference type="ComplexPortal" id="CPX-5993">
    <property type="entry name" value="26S proteasome complex"/>
</dbReference>
<dbReference type="ComplexPortal" id="CPX-8806">
    <property type="entry name" value="20S proteasome complex"/>
</dbReference>
<dbReference type="ComplexPortal" id="CPX-8841">
    <property type="entry name" value="PA200-20S single-capped proteasome"/>
</dbReference>
<dbReference type="ComplexPortal" id="CPX-8842">
    <property type="entry name" value="PA28-alphabeta double-capped 20S proteasome complex"/>
</dbReference>
<dbReference type="ComplexPortal" id="CPX-9001">
    <property type="entry name" value="PA28-gamma single-capped 20S proteasome complex"/>
</dbReference>
<dbReference type="ComplexPortal" id="CPX-9002">
    <property type="entry name" value="PA28-alphabeta single-capped 20S proteasome complex"/>
</dbReference>
<dbReference type="ComplexPortal" id="CPX-9003">
    <property type="entry name" value="20S immunoproteasome complex"/>
</dbReference>
<dbReference type="ComplexPortal" id="CPX-9004">
    <property type="entry name" value="20S thymoproteasome complex"/>
</dbReference>
<dbReference type="ComplexPortal" id="CPX-9021">
    <property type="entry name" value="20S spermatoproteasome complex"/>
</dbReference>
<dbReference type="ComplexPortal" id="CPX-9022">
    <property type="entry name" value="PA28-gamma double-capped 20S proteasome complex"/>
</dbReference>
<dbReference type="ComplexPortal" id="CPX-9063">
    <property type="entry name" value="PA200-20S-PA200 double-capped proteasome complex"/>
</dbReference>
<dbReference type="ComplexPortal" id="CPX-9082">
    <property type="entry name" value="19S-20S-PA28-alphabeta hybrid proteasome complex"/>
</dbReference>
<dbReference type="ComplexPortal" id="CPX-9085">
    <property type="entry name" value="19S-20S-PA28-gamma hybrid proteasome complex"/>
</dbReference>
<dbReference type="ComplexPortal" id="CPX-9086">
    <property type="entry name" value="30S proteasome complex"/>
</dbReference>
<dbReference type="CORUM" id="P25787"/>
<dbReference type="DIP" id="DIP-29364N"/>
<dbReference type="FunCoup" id="P25787">
    <property type="interactions" value="2512"/>
</dbReference>
<dbReference type="IntAct" id="P25787">
    <property type="interactions" value="94"/>
</dbReference>
<dbReference type="MINT" id="P25787"/>
<dbReference type="STRING" id="9606.ENSP00000223321"/>
<dbReference type="BindingDB" id="P25787"/>
<dbReference type="ChEMBL" id="CHEMBL2364701"/>
<dbReference type="DrugBank" id="DB08515">
    <property type="generic name" value="(3AR,6R,6AS)-6-((S)-((S)-CYCLOHEX-2-ENYL)(HYDROXY)METHYL)-6A-METHYL-4-OXO-HEXAHYDRO-2H-FURO[3,2-C]PYRROLE-6-CARBALDEHYDE"/>
</dbReference>
<dbReference type="MEROPS" id="T01.972"/>
<dbReference type="GlyGen" id="P25787">
    <property type="glycosylation" value="1 site, 1 O-linked glycan (1 site)"/>
</dbReference>
<dbReference type="iPTMnet" id="P25787"/>
<dbReference type="MetOSite" id="P25787"/>
<dbReference type="PhosphoSitePlus" id="P25787"/>
<dbReference type="SwissPalm" id="P25787"/>
<dbReference type="BioMuta" id="PSMA2"/>
<dbReference type="DMDM" id="130850"/>
<dbReference type="OGP" id="P25787"/>
<dbReference type="REPRODUCTION-2DPAGE" id="IPI00219622"/>
<dbReference type="jPOST" id="P25787"/>
<dbReference type="MassIVE" id="P25787"/>
<dbReference type="PaxDb" id="9606-ENSP00000223321"/>
<dbReference type="PeptideAtlas" id="P25787"/>
<dbReference type="ProteomicsDB" id="54289"/>
<dbReference type="Pumba" id="P25787"/>
<dbReference type="TopDownProteomics" id="P25787"/>
<dbReference type="Antibodypedia" id="2176">
    <property type="antibodies" value="409 antibodies from 35 providers"/>
</dbReference>
<dbReference type="DNASU" id="5683"/>
<dbReference type="Ensembl" id="ENST00000223321.9">
    <property type="protein sequence ID" value="ENSP00000223321.4"/>
    <property type="gene ID" value="ENSG00000106588.12"/>
</dbReference>
<dbReference type="GeneID" id="5683"/>
<dbReference type="KEGG" id="hsa:5683"/>
<dbReference type="MANE-Select" id="ENST00000223321.9">
    <property type="protein sequence ID" value="ENSP00000223321.4"/>
    <property type="RefSeq nucleotide sequence ID" value="NM_002787.5"/>
    <property type="RefSeq protein sequence ID" value="NP_002778.1"/>
</dbReference>
<dbReference type="UCSC" id="uc003thy.5">
    <property type="organism name" value="human"/>
</dbReference>
<dbReference type="AGR" id="HGNC:9531"/>
<dbReference type="CTD" id="5683"/>
<dbReference type="DisGeNET" id="5683"/>
<dbReference type="GeneCards" id="PSMA2"/>
<dbReference type="HGNC" id="HGNC:9531">
    <property type="gene designation" value="PSMA2"/>
</dbReference>
<dbReference type="HPA" id="ENSG00000106588">
    <property type="expression patterns" value="Low tissue specificity"/>
</dbReference>
<dbReference type="MIM" id="176842">
    <property type="type" value="gene"/>
</dbReference>
<dbReference type="neXtProt" id="NX_P25787"/>
<dbReference type="OpenTargets" id="ENSG00000106588"/>
<dbReference type="OpenTargets" id="ENSG00000256646"/>
<dbReference type="PharmGKB" id="PA33876"/>
<dbReference type="VEuPathDB" id="HostDB:ENSG00000106588"/>
<dbReference type="eggNOG" id="KOG0181">
    <property type="taxonomic scope" value="Eukaryota"/>
</dbReference>
<dbReference type="GeneTree" id="ENSGT00550000074870"/>
<dbReference type="HOGENOM" id="CLU_035750_4_1_1"/>
<dbReference type="InParanoid" id="P25787"/>
<dbReference type="OMA" id="ATCIGKD"/>
<dbReference type="OrthoDB" id="431557at2759"/>
<dbReference type="PAN-GO" id="P25787">
    <property type="GO annotations" value="3 GO annotations based on evolutionary models"/>
</dbReference>
<dbReference type="PhylomeDB" id="P25787"/>
<dbReference type="TreeFam" id="TF106207"/>
<dbReference type="PathwayCommons" id="P25787"/>
<dbReference type="Reactome" id="R-HSA-1169091">
    <property type="pathway name" value="Activation of NF-kappaB in B cells"/>
</dbReference>
<dbReference type="Reactome" id="R-HSA-1234176">
    <property type="pathway name" value="Oxygen-dependent proline hydroxylation of Hypoxia-inducible Factor Alpha"/>
</dbReference>
<dbReference type="Reactome" id="R-HSA-1236974">
    <property type="pathway name" value="ER-Phagosome pathway"/>
</dbReference>
<dbReference type="Reactome" id="R-HSA-1236978">
    <property type="pathway name" value="Cross-presentation of soluble exogenous antigens (endosomes)"/>
</dbReference>
<dbReference type="Reactome" id="R-HSA-174084">
    <property type="pathway name" value="Autodegradation of Cdh1 by Cdh1:APC/C"/>
</dbReference>
<dbReference type="Reactome" id="R-HSA-174113">
    <property type="pathway name" value="SCF-beta-TrCP mediated degradation of Emi1"/>
</dbReference>
<dbReference type="Reactome" id="R-HSA-174154">
    <property type="pathway name" value="APC/C:Cdc20 mediated degradation of Securin"/>
</dbReference>
<dbReference type="Reactome" id="R-HSA-174178">
    <property type="pathway name" value="APC/C:Cdh1 mediated degradation of Cdc20 and other APC/C:Cdh1 targeted proteins in late mitosis/early G1"/>
</dbReference>
<dbReference type="Reactome" id="R-HSA-174184">
    <property type="pathway name" value="Cdc20:Phospho-APC/C mediated degradation of Cyclin A"/>
</dbReference>
<dbReference type="Reactome" id="R-HSA-180534">
    <property type="pathway name" value="Vpu mediated degradation of CD4"/>
</dbReference>
<dbReference type="Reactome" id="R-HSA-180585">
    <property type="pathway name" value="Vif-mediated degradation of APOBEC3G"/>
</dbReference>
<dbReference type="Reactome" id="R-HSA-187577">
    <property type="pathway name" value="SCF(Skp2)-mediated degradation of p27/p21"/>
</dbReference>
<dbReference type="Reactome" id="R-HSA-195253">
    <property type="pathway name" value="Degradation of beta-catenin by the destruction complex"/>
</dbReference>
<dbReference type="Reactome" id="R-HSA-202424">
    <property type="pathway name" value="Downstream TCR signaling"/>
</dbReference>
<dbReference type="Reactome" id="R-HSA-211733">
    <property type="pathway name" value="Regulation of activated PAK-2p34 by proteasome mediated degradation"/>
</dbReference>
<dbReference type="Reactome" id="R-HSA-2467813">
    <property type="pathway name" value="Separation of Sister Chromatids"/>
</dbReference>
<dbReference type="Reactome" id="R-HSA-2871837">
    <property type="pathway name" value="FCERI mediated NF-kB activation"/>
</dbReference>
<dbReference type="Reactome" id="R-HSA-349425">
    <property type="pathway name" value="Autodegradation of the E3 ubiquitin ligase COP1"/>
</dbReference>
<dbReference type="Reactome" id="R-HSA-350562">
    <property type="pathway name" value="Regulation of ornithine decarboxylase (ODC)"/>
</dbReference>
<dbReference type="Reactome" id="R-HSA-382556">
    <property type="pathway name" value="ABC-family proteins mediated transport"/>
</dbReference>
<dbReference type="Reactome" id="R-HSA-450408">
    <property type="pathway name" value="AUF1 (hnRNP D0) binds and destabilizes mRNA"/>
</dbReference>
<dbReference type="Reactome" id="R-HSA-4608870">
    <property type="pathway name" value="Asymmetric localization of PCP proteins"/>
</dbReference>
<dbReference type="Reactome" id="R-HSA-4641257">
    <property type="pathway name" value="Degradation of AXIN"/>
</dbReference>
<dbReference type="Reactome" id="R-HSA-4641258">
    <property type="pathway name" value="Degradation of DVL"/>
</dbReference>
<dbReference type="Reactome" id="R-HSA-5358346">
    <property type="pathway name" value="Hedgehog ligand biogenesis"/>
</dbReference>
<dbReference type="Reactome" id="R-HSA-5362768">
    <property type="pathway name" value="Hh mutants are degraded by ERAD"/>
</dbReference>
<dbReference type="Reactome" id="R-HSA-5607761">
    <property type="pathway name" value="Dectin-1 mediated noncanonical NF-kB signaling"/>
</dbReference>
<dbReference type="Reactome" id="R-HSA-5607764">
    <property type="pathway name" value="CLEC7A (Dectin-1) signaling"/>
</dbReference>
<dbReference type="Reactome" id="R-HSA-5610780">
    <property type="pathway name" value="Degradation of GLI1 by the proteasome"/>
</dbReference>
<dbReference type="Reactome" id="R-HSA-5610783">
    <property type="pathway name" value="Degradation of GLI2 by the proteasome"/>
</dbReference>
<dbReference type="Reactome" id="R-HSA-5610785">
    <property type="pathway name" value="GLI3 is processed to GLI3R by the proteasome"/>
</dbReference>
<dbReference type="Reactome" id="R-HSA-5632684">
    <property type="pathway name" value="Hedgehog 'on' state"/>
</dbReference>
<dbReference type="Reactome" id="R-HSA-5658442">
    <property type="pathway name" value="Regulation of RAS by GAPs"/>
</dbReference>
<dbReference type="Reactome" id="R-HSA-5668541">
    <property type="pathway name" value="TNFR2 non-canonical NF-kB pathway"/>
</dbReference>
<dbReference type="Reactome" id="R-HSA-5676590">
    <property type="pathway name" value="NIK--&gt;noncanonical NF-kB signaling"/>
</dbReference>
<dbReference type="Reactome" id="R-HSA-5678895">
    <property type="pathway name" value="Defective CFTR causes cystic fibrosis"/>
</dbReference>
<dbReference type="Reactome" id="R-HSA-5687128">
    <property type="pathway name" value="MAPK6/MAPK4 signaling"/>
</dbReference>
<dbReference type="Reactome" id="R-HSA-5689603">
    <property type="pathway name" value="UCH proteinases"/>
</dbReference>
<dbReference type="Reactome" id="R-HSA-5689880">
    <property type="pathway name" value="Ub-specific processing proteases"/>
</dbReference>
<dbReference type="Reactome" id="R-HSA-6798695">
    <property type="pathway name" value="Neutrophil degranulation"/>
</dbReference>
<dbReference type="Reactome" id="R-HSA-68867">
    <property type="pathway name" value="Assembly of the pre-replicative complex"/>
</dbReference>
<dbReference type="Reactome" id="R-HSA-68949">
    <property type="pathway name" value="Orc1 removal from chromatin"/>
</dbReference>
<dbReference type="Reactome" id="R-HSA-69017">
    <property type="pathway name" value="CDK-mediated phosphorylation and removal of Cdc6"/>
</dbReference>
<dbReference type="Reactome" id="R-HSA-69481">
    <property type="pathway name" value="G2/M Checkpoints"/>
</dbReference>
<dbReference type="Reactome" id="R-HSA-69601">
    <property type="pathway name" value="Ubiquitin Mediated Degradation of Phosphorylated Cdc25A"/>
</dbReference>
<dbReference type="Reactome" id="R-HSA-75815">
    <property type="pathway name" value="Ubiquitin-dependent degradation of Cyclin D"/>
</dbReference>
<dbReference type="Reactome" id="R-HSA-8852276">
    <property type="pathway name" value="The role of GTSE1 in G2/M progression after G2 checkpoint"/>
</dbReference>
<dbReference type="Reactome" id="R-HSA-8854050">
    <property type="pathway name" value="FBXL7 down-regulates AURKA during mitotic entry and in early mitosis"/>
</dbReference>
<dbReference type="Reactome" id="R-HSA-8939236">
    <property type="pathway name" value="RUNX1 regulates transcription of genes involved in differentiation of HSCs"/>
</dbReference>
<dbReference type="Reactome" id="R-HSA-8939902">
    <property type="pathway name" value="Regulation of RUNX2 expression and activity"/>
</dbReference>
<dbReference type="Reactome" id="R-HSA-8941858">
    <property type="pathway name" value="Regulation of RUNX3 expression and activity"/>
</dbReference>
<dbReference type="Reactome" id="R-HSA-8948751">
    <property type="pathway name" value="Regulation of PTEN stability and activity"/>
</dbReference>
<dbReference type="Reactome" id="R-HSA-8951664">
    <property type="pathway name" value="Neddylation"/>
</dbReference>
<dbReference type="Reactome" id="R-HSA-9010553">
    <property type="pathway name" value="Regulation of expression of SLITs and ROBOs"/>
</dbReference>
<dbReference type="Reactome" id="R-HSA-9020702">
    <property type="pathway name" value="Interleukin-1 signaling"/>
</dbReference>
<dbReference type="Reactome" id="R-HSA-9604323">
    <property type="pathway name" value="Negative regulation of NOTCH4 signaling"/>
</dbReference>
<dbReference type="Reactome" id="R-HSA-9755511">
    <property type="pathway name" value="KEAP1-NFE2L2 pathway"/>
</dbReference>
<dbReference type="Reactome" id="R-HSA-9762114">
    <property type="pathway name" value="GSK3B and BTRC:CUL1-mediated-degradation of NFE2L2"/>
</dbReference>
<dbReference type="Reactome" id="R-HSA-9824272">
    <property type="pathway name" value="Somitogenesis"/>
</dbReference>
<dbReference type="Reactome" id="R-HSA-983168">
    <property type="pathway name" value="Antigen processing: Ubiquitination &amp; Proteasome degradation"/>
</dbReference>
<dbReference type="Reactome" id="R-HSA-9907900">
    <property type="pathway name" value="Proteasome assembly"/>
</dbReference>
<dbReference type="SignaLink" id="P25787"/>
<dbReference type="SIGNOR" id="P25787"/>
<dbReference type="BioGRID-ORCS" id="5683">
    <property type="hits" value="826 hits in 1146 CRISPR screens"/>
</dbReference>
<dbReference type="ChiTaRS" id="PSMA2">
    <property type="organism name" value="human"/>
</dbReference>
<dbReference type="EvolutionaryTrace" id="P25787"/>
<dbReference type="GeneWiki" id="PSMA2"/>
<dbReference type="GenomeRNAi" id="5683"/>
<dbReference type="Pharos" id="P25787">
    <property type="development level" value="Tbio"/>
</dbReference>
<dbReference type="PRO" id="PR:P25787"/>
<dbReference type="Proteomes" id="UP000005640">
    <property type="component" value="Chromosome 7"/>
</dbReference>
<dbReference type="RNAct" id="P25787">
    <property type="molecule type" value="protein"/>
</dbReference>
<dbReference type="Bgee" id="ENSG00000106588">
    <property type="expression patterns" value="Expressed in ganglionic eminence and 101 other cell types or tissues"/>
</dbReference>
<dbReference type="ExpressionAtlas" id="P25787">
    <property type="expression patterns" value="baseline and differential"/>
</dbReference>
<dbReference type="GO" id="GO:0005737">
    <property type="term" value="C:cytoplasm"/>
    <property type="evidence" value="ECO:0000314"/>
    <property type="project" value="UniProtKB"/>
</dbReference>
<dbReference type="GO" id="GO:0005829">
    <property type="term" value="C:cytosol"/>
    <property type="evidence" value="ECO:0000304"/>
    <property type="project" value="Reactome"/>
</dbReference>
<dbReference type="GO" id="GO:0070062">
    <property type="term" value="C:extracellular exosome"/>
    <property type="evidence" value="ECO:0007005"/>
    <property type="project" value="UniProtKB"/>
</dbReference>
<dbReference type="GO" id="GO:0005576">
    <property type="term" value="C:extracellular region"/>
    <property type="evidence" value="ECO:0000304"/>
    <property type="project" value="Reactome"/>
</dbReference>
<dbReference type="GO" id="GO:1904813">
    <property type="term" value="C:ficolin-1-rich granule lumen"/>
    <property type="evidence" value="ECO:0000304"/>
    <property type="project" value="Reactome"/>
</dbReference>
<dbReference type="GO" id="GO:0005654">
    <property type="term" value="C:nucleoplasm"/>
    <property type="evidence" value="ECO:0000304"/>
    <property type="project" value="Reactome"/>
</dbReference>
<dbReference type="GO" id="GO:0005634">
    <property type="term" value="C:nucleus"/>
    <property type="evidence" value="ECO:0000314"/>
    <property type="project" value="UniProtKB"/>
</dbReference>
<dbReference type="GO" id="GO:0000932">
    <property type="term" value="C:P-body"/>
    <property type="evidence" value="ECO:0000250"/>
    <property type="project" value="UniProtKB"/>
</dbReference>
<dbReference type="GO" id="GO:0000502">
    <property type="term" value="C:proteasome complex"/>
    <property type="evidence" value="ECO:0000314"/>
    <property type="project" value="UniProtKB"/>
</dbReference>
<dbReference type="GO" id="GO:0005839">
    <property type="term" value="C:proteasome core complex"/>
    <property type="evidence" value="ECO:0000314"/>
    <property type="project" value="UniProtKB"/>
</dbReference>
<dbReference type="GO" id="GO:0019773">
    <property type="term" value="C:proteasome core complex, alpha-subunit complex"/>
    <property type="evidence" value="ECO:0000250"/>
    <property type="project" value="UniProtKB"/>
</dbReference>
<dbReference type="GO" id="GO:0034774">
    <property type="term" value="C:secretory granule lumen"/>
    <property type="evidence" value="ECO:0000304"/>
    <property type="project" value="Reactome"/>
</dbReference>
<dbReference type="GO" id="GO:0043161">
    <property type="term" value="P:proteasome-mediated ubiquitin-dependent protein catabolic process"/>
    <property type="evidence" value="ECO:0000250"/>
    <property type="project" value="FlyBase"/>
</dbReference>
<dbReference type="GO" id="GO:0009615">
    <property type="term" value="P:response to virus"/>
    <property type="evidence" value="ECO:0000270"/>
    <property type="project" value="UniProtKB"/>
</dbReference>
<dbReference type="CDD" id="cd03750">
    <property type="entry name" value="proteasome_alpha_type_2"/>
    <property type="match status" value="1"/>
</dbReference>
<dbReference type="FunFam" id="3.60.20.10:FF:000012">
    <property type="entry name" value="Proteasome subunit alpha type"/>
    <property type="match status" value="1"/>
</dbReference>
<dbReference type="Gene3D" id="3.60.20.10">
    <property type="entry name" value="Glutamine Phosphoribosylpyrophosphate, subunit 1, domain 1"/>
    <property type="match status" value="1"/>
</dbReference>
<dbReference type="InterPro" id="IPR029055">
    <property type="entry name" value="Ntn_hydrolases_N"/>
</dbReference>
<dbReference type="InterPro" id="IPR050115">
    <property type="entry name" value="Proteasome_alpha"/>
</dbReference>
<dbReference type="InterPro" id="IPR023332">
    <property type="entry name" value="Proteasome_alpha-type"/>
</dbReference>
<dbReference type="InterPro" id="IPR000426">
    <property type="entry name" value="Proteasome_asu_N"/>
</dbReference>
<dbReference type="InterPro" id="IPR001353">
    <property type="entry name" value="Proteasome_sua/b"/>
</dbReference>
<dbReference type="NCBIfam" id="NF003075">
    <property type="entry name" value="PRK03996.1"/>
    <property type="match status" value="1"/>
</dbReference>
<dbReference type="PANTHER" id="PTHR11599">
    <property type="entry name" value="PROTEASOME SUBUNIT ALPHA/BETA"/>
    <property type="match status" value="1"/>
</dbReference>
<dbReference type="Pfam" id="PF00227">
    <property type="entry name" value="Proteasome"/>
    <property type="match status" value="1"/>
</dbReference>
<dbReference type="Pfam" id="PF10584">
    <property type="entry name" value="Proteasome_A_N"/>
    <property type="match status" value="1"/>
</dbReference>
<dbReference type="SMART" id="SM00948">
    <property type="entry name" value="Proteasome_A_N"/>
    <property type="match status" value="1"/>
</dbReference>
<dbReference type="SUPFAM" id="SSF56235">
    <property type="entry name" value="N-terminal nucleophile aminohydrolases (Ntn hydrolases)"/>
    <property type="match status" value="1"/>
</dbReference>
<dbReference type="PROSITE" id="PS00388">
    <property type="entry name" value="PROTEASOME_ALPHA_1"/>
    <property type="match status" value="1"/>
</dbReference>
<dbReference type="PROSITE" id="PS51475">
    <property type="entry name" value="PROTEASOME_ALPHA_2"/>
    <property type="match status" value="1"/>
</dbReference>
<gene>
    <name evidence="18" type="primary">PSMA2</name>
    <name type="synonym">HC3</name>
    <name type="synonym">PSC3</name>
</gene>
<sequence length="234" mass="25899">MAERGYSFSLTTFSPSGKLVQIEYALAAVAGGAPSVGIKAANGVVLATEKKQKSILYDERSVHKVEPITKHIGLVYSGMGPDYRVLVHRARKLAQQYYLVYQEPIPTAQLVQRVASVMQEYTQSGGVRPFGVSLLICGWNEGRPYLFQSDPSGAYFAWKATAMGKNYVNGKTFLEKRYNEDLELEDAIHTAILTLKESFEGQMTEDNIEVGICNEAGFRRLTPTEVKDYLAAIA</sequence>
<organism>
    <name type="scientific">Homo sapiens</name>
    <name type="common">Human</name>
    <dbReference type="NCBI Taxonomy" id="9606"/>
    <lineage>
        <taxon>Eukaryota</taxon>
        <taxon>Metazoa</taxon>
        <taxon>Chordata</taxon>
        <taxon>Craniata</taxon>
        <taxon>Vertebrata</taxon>
        <taxon>Euteleostomi</taxon>
        <taxon>Mammalia</taxon>
        <taxon>Eutheria</taxon>
        <taxon>Euarchontoglires</taxon>
        <taxon>Primates</taxon>
        <taxon>Haplorrhini</taxon>
        <taxon>Catarrhini</taxon>
        <taxon>Hominidae</taxon>
        <taxon>Homo</taxon>
    </lineage>
</organism>
<comment type="function">
    <text evidence="6 11 16">Component of the 20S core proteasome complex involved in the proteolytic degradation of most intracellular proteins. This complex plays numerous essential roles within the cell by associating with different regulatory particles. Associated with two 19S regulatory particles, forms the 26S proteasome and thus participates in the ATP-dependent degradation of ubiquitinated proteins. The 26S proteasome plays a key role in the maintenance of protein homeostasis by removing misfolded or damaged proteins that could impair cellular functions, and by removing proteins whose functions are no longer required. Associated with the PA200 or PA28, the 20S proteasome mediates ubiquitin-independent protein degradation. This type of proteolysis is required in several pathways including spermatogenesis (20S-PA200 complex) or generation of a subset of MHC class I-presented antigenic peptides (20S-PA28 complex).</text>
</comment>
<comment type="subunit">
    <text evidence="9 10 12 13 14 15">The 26S proteasome consists of a 20S proteasome core and two 19S regulatory subunits. The 20S proteasome core is a barrel-shaped complex made of 28 subunits that are arranged in four stacked rings. The two outer rings are each formed by seven alpha subunits, and the two inner rings are formed by seven beta subunits. The proteolytic activity is exerted by three beta-subunits PSMB5, PSMB6 and PSMB7.</text>
</comment>
<comment type="interaction">
    <interactant intactId="EBI-603262">
        <id>P25787</id>
    </interactant>
    <interactant intactId="EBI-359352">
        <id>P25786</id>
        <label>PSMA1</label>
    </interactant>
    <organismsDiffer>false</organismsDiffer>
    <experiments>21</experiments>
</comment>
<comment type="interaction">
    <interactant intactId="EBI-603262">
        <id>P25787</id>
    </interactant>
    <interactant intactId="EBI-348380">
        <id>P25788</id>
        <label>PSMA3</label>
    </interactant>
    <organismsDiffer>false</organismsDiffer>
    <experiments>6</experiments>
</comment>
<comment type="interaction">
    <interactant intactId="EBI-603262">
        <id>P25787</id>
    </interactant>
    <interactant intactId="EBI-359310">
        <id>P25789</id>
        <label>PSMA4</label>
    </interactant>
    <organismsDiffer>false</organismsDiffer>
    <experiments>12</experiments>
</comment>
<comment type="interaction">
    <interactant intactId="EBI-603262">
        <id>P25787</id>
    </interactant>
    <interactant intactId="EBI-357793">
        <id>P60900</id>
        <label>PSMA6</label>
    </interactant>
    <organismsDiffer>false</organismsDiffer>
    <experiments>10</experiments>
</comment>
<comment type="interaction">
    <interactant intactId="EBI-603262">
        <id>P25787</id>
    </interactant>
    <interactant intactId="EBI-603272">
        <id>O14818</id>
        <label>PSMA7</label>
    </interactant>
    <organismsDiffer>false</organismsDiffer>
    <experiments>9</experiments>
</comment>
<comment type="interaction">
    <interactant intactId="EBI-603262">
        <id>P25787</id>
    </interactant>
    <interactant intactId="EBI-359318">
        <id>P55036</id>
        <label>PSMD4</label>
    </interactant>
    <organismsDiffer>false</organismsDiffer>
    <experiments>2</experiments>
</comment>
<comment type="interaction">
    <interactant intactId="EBI-603262">
        <id>P25787</id>
    </interactant>
    <interactant intactId="EBI-25489144">
        <id>Q6S8E0</id>
        <label>ORF9b</label>
    </interactant>
    <organismsDiffer>true</organismsDiffer>
    <experiments>2</experiments>
</comment>
<comment type="subcellular location">
    <subcellularLocation>
        <location evidence="5 15">Cytoplasm</location>
    </subcellularLocation>
    <subcellularLocation>
        <location evidence="5 15">Nucleus</location>
    </subcellularLocation>
    <text evidence="2 15">Translocated from the cytoplasm into the nucleus following interaction with AKIRIN2, which bridges the proteasome with the nuclear import receptor IPO9 (PubMed:34711951). Colocalizes with TRIM5 in cytoplasmic bodies (By similarity).</text>
</comment>
<comment type="induction">
    <text evidence="4 7">Down-regulated by antioxidants BO-653 and probucol. Down-regulated in response to enterovirus 71 (EV71) infection (at protein level).</text>
</comment>
<comment type="PTM">
    <text evidence="1">Phosphorylated on tyrosine residues; which may be important for nuclear import.</text>
</comment>
<comment type="similarity">
    <text evidence="3">Belongs to the peptidase T1A family.</text>
</comment>
<feature type="initiator methionine" description="Removed" evidence="20">
    <location>
        <position position="1"/>
    </location>
</feature>
<feature type="chain" id="PRO_0000124077" description="Proteasome subunit alpha type-2">
    <location>
        <begin position="2"/>
        <end position="234"/>
    </location>
</feature>
<feature type="modified residue" description="N-acetylalanine" evidence="20">
    <location>
        <position position="2"/>
    </location>
</feature>
<feature type="modified residue" description="Phosphotyrosine" evidence="2">
    <location>
        <position position="6"/>
    </location>
</feature>
<feature type="modified residue" description="Phosphoserine" evidence="22">
    <location>
        <position position="7"/>
    </location>
</feature>
<feature type="modified residue" description="Phosphoserine" evidence="22">
    <location>
        <position position="14"/>
    </location>
</feature>
<feature type="modified residue" description="Phosphoserine" evidence="22">
    <location>
        <position position="16"/>
    </location>
</feature>
<feature type="modified residue" description="Phosphotyrosine" evidence="19">
    <location>
        <position position="24"/>
    </location>
</feature>
<feature type="modified residue" description="N6-acetyllysine" evidence="21">
    <location>
        <position position="70"/>
    </location>
</feature>
<feature type="modified residue" description="Phosphotyrosine" evidence="22">
    <location>
        <position position="76"/>
    </location>
</feature>
<feature type="modified residue" description="Phosphotyrosine" evidence="1">
    <location>
        <position position="121"/>
    </location>
</feature>
<feature type="modified residue" description="N6-acetyllysine" evidence="21">
    <location>
        <position position="171"/>
    </location>
</feature>
<feature type="sequence variant" id="VAR_036278" description="In a colorectal cancer sample; somatic mutation." evidence="8">
    <original>L</original>
    <variation>V</variation>
    <location>
        <position position="110"/>
    </location>
</feature>
<feature type="helix" evidence="29">
    <location>
        <begin position="4"/>
        <end position="6"/>
    </location>
</feature>
<feature type="strand" evidence="25">
    <location>
        <begin position="8"/>
        <end position="10"/>
    </location>
</feature>
<feature type="strand" evidence="28">
    <location>
        <begin position="11"/>
        <end position="13"/>
    </location>
</feature>
<feature type="strand" evidence="28">
    <location>
        <begin position="17"/>
        <end position="19"/>
    </location>
</feature>
<feature type="helix" evidence="23">
    <location>
        <begin position="20"/>
        <end position="30"/>
    </location>
</feature>
<feature type="strand" evidence="23">
    <location>
        <begin position="35"/>
        <end position="39"/>
    </location>
</feature>
<feature type="strand" evidence="23">
    <location>
        <begin position="44"/>
        <end position="49"/>
    </location>
</feature>
<feature type="strand" evidence="27">
    <location>
        <begin position="55"/>
        <end position="57"/>
    </location>
</feature>
<feature type="helix" evidence="24">
    <location>
        <begin position="59"/>
        <end position="61"/>
    </location>
</feature>
<feature type="strand" evidence="23">
    <location>
        <begin position="64"/>
        <end position="69"/>
    </location>
</feature>
<feature type="strand" evidence="23">
    <location>
        <begin position="72"/>
        <end position="78"/>
    </location>
</feature>
<feature type="helix" evidence="23">
    <location>
        <begin position="80"/>
        <end position="101"/>
    </location>
</feature>
<feature type="helix" evidence="23">
    <location>
        <begin position="107"/>
        <end position="120"/>
    </location>
</feature>
<feature type="turn" evidence="23">
    <location>
        <begin position="121"/>
        <end position="123"/>
    </location>
</feature>
<feature type="strand" evidence="28">
    <location>
        <begin position="124"/>
        <end position="127"/>
    </location>
</feature>
<feature type="strand" evidence="23">
    <location>
        <begin position="131"/>
        <end position="140"/>
    </location>
</feature>
<feature type="strand" evidence="23">
    <location>
        <begin position="143"/>
        <end position="149"/>
    </location>
</feature>
<feature type="turn" evidence="26">
    <location>
        <begin position="151"/>
        <end position="153"/>
    </location>
</feature>
<feature type="strand" evidence="23">
    <location>
        <begin position="155"/>
        <end position="164"/>
    </location>
</feature>
<feature type="helix" evidence="23">
    <location>
        <begin position="167"/>
        <end position="177"/>
    </location>
</feature>
<feature type="helix" evidence="23">
    <location>
        <begin position="184"/>
        <end position="196"/>
    </location>
</feature>
<feature type="strand" evidence="23">
    <location>
        <begin position="207"/>
        <end position="214"/>
    </location>
</feature>
<feature type="strand" evidence="23">
    <location>
        <begin position="217"/>
        <end position="220"/>
    </location>
</feature>
<feature type="helix" evidence="23">
    <location>
        <begin position="223"/>
        <end position="231"/>
    </location>
</feature>
<name>PSA2_HUMAN</name>
<keyword id="KW-0002">3D-structure</keyword>
<keyword id="KW-0007">Acetylation</keyword>
<keyword id="KW-0963">Cytoplasm</keyword>
<keyword id="KW-0903">Direct protein sequencing</keyword>
<keyword id="KW-0539">Nucleus</keyword>
<keyword id="KW-0597">Phosphoprotein</keyword>
<keyword id="KW-0647">Proteasome</keyword>
<keyword id="KW-1267">Proteomics identification</keyword>
<keyword id="KW-1185">Reference proteome</keyword>
<accession>P25787</accession>
<accession>Q6ICS6</accession>
<accession>Q9BU45</accession>
<protein>
    <recommendedName>
        <fullName>Proteasome subunit alpha type-2</fullName>
    </recommendedName>
    <alternativeName>
        <fullName>Macropain subunit C3</fullName>
    </alternativeName>
    <alternativeName>
        <fullName>Multicatalytic endopeptidase complex subunit C3</fullName>
    </alternativeName>
    <alternativeName>
        <fullName>Proteasome component C3</fullName>
    </alternativeName>
    <alternativeName>
        <fullName evidence="17">Proteasome subunit alpha-2</fullName>
        <shortName evidence="17">alpha-2</shortName>
    </alternativeName>
</protein>